<name>ATG9A_HUMAN</name>
<protein>
    <recommendedName>
        <fullName evidence="32">Autophagy-related protein 9A</fullName>
    </recommendedName>
    <alternativeName>
        <fullName evidence="29">APG9-like 1</fullName>
    </alternativeName>
    <alternativeName>
        <fullName evidence="31 33">mATG9</fullName>
    </alternativeName>
</protein>
<sequence>MAQFDTEYQRLEASYSDSPPGEEDLLVHVAEGSKSPWHHIENLDLFFSRVYNLHQKNGFTCMLIGEIFELMQFLFVVAFTTFLVSCVDYDILFANKMVNHSLHPTEPVKVTLPDAFLPAQVCSARIQENGSLITILVIAGVFWIHRLIKFIYNICCYWEIHSFYLHALRIPMSALPYCTWQEVQARIVQTQKEHQICIHKRELTELDIYHRILRFQNYMVALVNKSLLPLRFRLPGLGEAVFFTRGLKYNFELILFWGPGSLFLNEWSLKAEYKRGGQRLELAQRLSNRILWIGIANFLLCPLILIWQILYAFFSYAEVLKREPGALGARCWSLYGRCYLRHFNELEHELQSRLNRGYKPASKYMNCFLSPLLTLLAKNGAFFAGSILAVLIALTIYDEDVLAVEHVLTTVTLLGVTVTVCRSFIPDQHMVFCPEQLLRVILAHIHYMPDHWQGNAHRSQTRDEFAQLFQYKAVFILEELLSPIVTPLILIFCLRPRALEIIDFFRNFTVEVVGVGDTCSFAQMDVRQHGHPQWLSAGQTEASVYQQAEDGKTELSLMHFAITNPGWQPPRESTAFLGFLKEQVQRDGAAASLAQGGLLPENALFTSIQSLQSESEPLSLIANVVAGSSCRGPPLPRDLQGSRHRAEVASALRSFSPLQPGQAPTGRAHSTMTGSGVDARTASSGSSVWEGQLQSLVLSEYASTEMSLHALYMHQLHKQQAQAEPERHVWHRRESDESGESAPDEGGEGARAPQSIPRSASYPCAAPRPGAPETTALHGGFQRRYGGITDPGTVPRVPSHFSRLPLGGWAEDGQSASRHPEPVPEEGSEDELPPQVHKV</sequence>
<evidence type="ECO:0000250" key="1">
    <source>
        <dbReference type="UniProtKB" id="Q68FE2"/>
    </source>
</evidence>
<evidence type="ECO:0000255" key="2"/>
<evidence type="ECO:0000256" key="3">
    <source>
        <dbReference type="SAM" id="MobiDB-lite"/>
    </source>
</evidence>
<evidence type="ECO:0000269" key="4">
    <source>
    </source>
</evidence>
<evidence type="ECO:0000269" key="5">
    <source>
    </source>
</evidence>
<evidence type="ECO:0000269" key="6">
    <source>
    </source>
</evidence>
<evidence type="ECO:0000269" key="7">
    <source>
    </source>
</evidence>
<evidence type="ECO:0000269" key="8">
    <source>
    </source>
</evidence>
<evidence type="ECO:0000269" key="9">
    <source>
    </source>
</evidence>
<evidence type="ECO:0000269" key="10">
    <source>
    </source>
</evidence>
<evidence type="ECO:0000269" key="11">
    <source>
    </source>
</evidence>
<evidence type="ECO:0000269" key="12">
    <source>
    </source>
</evidence>
<evidence type="ECO:0000269" key="13">
    <source>
    </source>
</evidence>
<evidence type="ECO:0000269" key="14">
    <source>
    </source>
</evidence>
<evidence type="ECO:0000269" key="15">
    <source>
    </source>
</evidence>
<evidence type="ECO:0000269" key="16">
    <source>
    </source>
</evidence>
<evidence type="ECO:0000269" key="17">
    <source>
    </source>
</evidence>
<evidence type="ECO:0000269" key="18">
    <source>
    </source>
</evidence>
<evidence type="ECO:0000269" key="19">
    <source>
    </source>
</evidence>
<evidence type="ECO:0000269" key="20">
    <source>
    </source>
</evidence>
<evidence type="ECO:0000269" key="21">
    <source>
    </source>
</evidence>
<evidence type="ECO:0000269" key="22">
    <source>
    </source>
</evidence>
<evidence type="ECO:0000269" key="23">
    <source>
    </source>
</evidence>
<evidence type="ECO:0000269" key="24">
    <source>
    </source>
</evidence>
<evidence type="ECO:0000269" key="25">
    <source>
    </source>
</evidence>
<evidence type="ECO:0000269" key="26">
    <source>
    </source>
</evidence>
<evidence type="ECO:0000269" key="27">
    <source>
    </source>
</evidence>
<evidence type="ECO:0000303" key="28">
    <source>
    </source>
</evidence>
<evidence type="ECO:0000303" key="29">
    <source>
    </source>
</evidence>
<evidence type="ECO:0000303" key="30">
    <source>
    </source>
</evidence>
<evidence type="ECO:0000303" key="31">
    <source>
    </source>
</evidence>
<evidence type="ECO:0000303" key="32">
    <source>
    </source>
</evidence>
<evidence type="ECO:0000303" key="33">
    <source>
    </source>
</evidence>
<evidence type="ECO:0000305" key="34"/>
<evidence type="ECO:0000305" key="35">
    <source>
    </source>
</evidence>
<evidence type="ECO:0000312" key="36">
    <source>
        <dbReference type="HGNC" id="HGNC:22408"/>
    </source>
</evidence>
<evidence type="ECO:0007744" key="37">
    <source>
        <dbReference type="PDB" id="6WQZ"/>
    </source>
</evidence>
<evidence type="ECO:0007744" key="38">
    <source>
        <dbReference type="PDB" id="6WR4"/>
    </source>
</evidence>
<evidence type="ECO:0007744" key="39">
    <source>
        <dbReference type="PDB" id="7JLO"/>
    </source>
</evidence>
<evidence type="ECO:0007744" key="40">
    <source>
        <dbReference type="PDB" id="7JLP"/>
    </source>
</evidence>
<evidence type="ECO:0007744" key="41">
    <source>
        <dbReference type="PDB" id="7JLQ"/>
    </source>
</evidence>
<evidence type="ECO:0007744" key="42">
    <source>
    </source>
</evidence>
<evidence type="ECO:0007744" key="43">
    <source>
    </source>
</evidence>
<evidence type="ECO:0007744" key="44">
    <source>
    </source>
</evidence>
<evidence type="ECO:0007744" key="45">
    <source>
    </source>
</evidence>
<evidence type="ECO:0007744" key="46">
    <source>
    </source>
</evidence>
<evidence type="ECO:0007744" key="47">
    <source>
    </source>
</evidence>
<evidence type="ECO:0007744" key="48">
    <source>
    </source>
</evidence>
<evidence type="ECO:0007744" key="49">
    <source>
    </source>
</evidence>
<evidence type="ECO:0007829" key="50">
    <source>
        <dbReference type="PDB" id="6WQZ"/>
    </source>
</evidence>
<evidence type="ECO:0007829" key="51">
    <source>
        <dbReference type="PDB" id="6WR4"/>
    </source>
</evidence>
<evidence type="ECO:0007829" key="52">
    <source>
        <dbReference type="PDB" id="7JLO"/>
    </source>
</evidence>
<evidence type="ECO:0007829" key="53">
    <source>
        <dbReference type="PDB" id="7JLP"/>
    </source>
</evidence>
<accession>Q7Z3C6</accession>
<accession>Q3ZAQ6</accession>
<accession>Q6P0N7</accession>
<accession>Q7Z317</accession>
<accession>Q7Z320</accession>
<accession>Q8NDK6</accession>
<accession>Q8WU65</accession>
<accession>Q9BVL5</accession>
<accession>Q9H6L1</accession>
<accession>Q9HAG7</accession>
<dbReference type="EMBL" id="AL833865">
    <property type="protein sequence ID" value="CAD38723.1"/>
    <property type="molecule type" value="mRNA"/>
</dbReference>
<dbReference type="EMBL" id="BX537984">
    <property type="protein sequence ID" value="CAD97944.1"/>
    <property type="molecule type" value="mRNA"/>
</dbReference>
<dbReference type="EMBL" id="BX538192">
    <property type="protein sequence ID" value="CAD98061.1"/>
    <property type="molecule type" value="mRNA"/>
</dbReference>
<dbReference type="EMBL" id="BX538198">
    <property type="protein sequence ID" value="CAD98064.1"/>
    <property type="molecule type" value="mRNA"/>
</dbReference>
<dbReference type="EMBL" id="AC068946">
    <property type="status" value="NOT_ANNOTATED_CDS"/>
    <property type="molecule type" value="Genomic_DNA"/>
</dbReference>
<dbReference type="EMBL" id="CH471063">
    <property type="protein sequence ID" value="EAW70706.1"/>
    <property type="molecule type" value="Genomic_DNA"/>
</dbReference>
<dbReference type="EMBL" id="BC001098">
    <property type="protein sequence ID" value="AAH01098.2"/>
    <property type="molecule type" value="mRNA"/>
</dbReference>
<dbReference type="EMBL" id="BC021202">
    <property type="protein sequence ID" value="AAH21202.2"/>
    <property type="molecule type" value="mRNA"/>
</dbReference>
<dbReference type="EMBL" id="BC065534">
    <property type="protein sequence ID" value="AAH65534.1"/>
    <property type="molecule type" value="mRNA"/>
</dbReference>
<dbReference type="EMBL" id="AK021732">
    <property type="protein sequence ID" value="BAB13882.1"/>
    <property type="status" value="ALT_INIT"/>
    <property type="molecule type" value="mRNA"/>
</dbReference>
<dbReference type="EMBL" id="AK027448">
    <property type="protein sequence ID" value="BAB55119.1"/>
    <property type="status" value="ALT_INIT"/>
    <property type="molecule type" value="mRNA"/>
</dbReference>
<dbReference type="EMBL" id="AK025822">
    <property type="protein sequence ID" value="BAB15246.1"/>
    <property type="status" value="ALT_INIT"/>
    <property type="molecule type" value="mRNA"/>
</dbReference>
<dbReference type="EMBL" id="BK004018">
    <property type="protein sequence ID" value="DAA05199.1"/>
    <property type="molecule type" value="mRNA"/>
</dbReference>
<dbReference type="CCDS" id="CCDS42820.1">
    <molecule id="Q7Z3C6-1"/>
</dbReference>
<dbReference type="RefSeq" id="NP_001070666.1">
    <molecule id="Q7Z3C6-1"/>
    <property type="nucleotide sequence ID" value="NM_001077198.3"/>
</dbReference>
<dbReference type="RefSeq" id="NP_076990.4">
    <molecule id="Q7Z3C6-1"/>
    <property type="nucleotide sequence ID" value="NM_024085.4"/>
</dbReference>
<dbReference type="PDB" id="6WQZ">
    <property type="method" value="EM"/>
    <property type="resolution" value="2.80 A"/>
    <property type="chains" value="A/B/C/D/E/F=1-688"/>
</dbReference>
<dbReference type="PDB" id="6WR4">
    <property type="method" value="EM"/>
    <property type="resolution" value="2.90 A"/>
    <property type="chains" value="A/B/C=1-839"/>
</dbReference>
<dbReference type="PDB" id="7JLO">
    <property type="method" value="EM"/>
    <property type="resolution" value="3.40 A"/>
    <property type="chains" value="A/B/C=1-578"/>
</dbReference>
<dbReference type="PDB" id="7JLP">
    <property type="method" value="EM"/>
    <property type="resolution" value="3.40 A"/>
    <property type="chains" value="A/B/C=1-578"/>
</dbReference>
<dbReference type="PDB" id="7JLQ">
    <property type="method" value="EM"/>
    <property type="resolution" value="4.00 A"/>
    <property type="chains" value="A/B/C=1-578"/>
</dbReference>
<dbReference type="PDB" id="8KBZ">
    <property type="method" value="EM"/>
    <property type="resolution" value="3.97 A"/>
    <property type="chains" value="A/B/C=1-839"/>
</dbReference>
<dbReference type="PDB" id="8KC3">
    <property type="method" value="EM"/>
    <property type="resolution" value="7.00 A"/>
    <property type="chains" value="A/B/C=1-839"/>
</dbReference>
<dbReference type="PDB" id="8Y1L">
    <property type="method" value="EM"/>
    <property type="resolution" value="7.05 A"/>
    <property type="chains" value="C/D/E=1-839"/>
</dbReference>
<dbReference type="PDBsum" id="6WQZ"/>
<dbReference type="PDBsum" id="6WR4"/>
<dbReference type="PDBsum" id="7JLO"/>
<dbReference type="PDBsum" id="7JLP"/>
<dbReference type="PDBsum" id="7JLQ"/>
<dbReference type="PDBsum" id="8KBZ"/>
<dbReference type="PDBsum" id="8KC3"/>
<dbReference type="PDBsum" id="8Y1L"/>
<dbReference type="EMDB" id="EMD-15604"/>
<dbReference type="EMDB" id="EMD-21874"/>
<dbReference type="EMDB" id="EMD-21876"/>
<dbReference type="EMDB" id="EMD-22375"/>
<dbReference type="EMDB" id="EMD-22376"/>
<dbReference type="EMDB" id="EMD-22377"/>
<dbReference type="EMDB" id="EMD-37088"/>
<dbReference type="EMDB" id="EMD-37091"/>
<dbReference type="EMDB" id="EMD-38839"/>
<dbReference type="SMR" id="Q7Z3C6"/>
<dbReference type="BioGRID" id="122518">
    <property type="interactions" value="455"/>
</dbReference>
<dbReference type="FunCoup" id="Q7Z3C6">
    <property type="interactions" value="3143"/>
</dbReference>
<dbReference type="IntAct" id="Q7Z3C6">
    <property type="interactions" value="225"/>
</dbReference>
<dbReference type="MINT" id="Q7Z3C6"/>
<dbReference type="STRING" id="9606.ENSP00000386710"/>
<dbReference type="TCDB" id="9.A.15.2.1">
    <property type="family name" value="the autophagy-related phagophore-formation transporter (apt) family"/>
</dbReference>
<dbReference type="GlyCosmos" id="Q7Z3C6">
    <property type="glycosylation" value="2 sites, 1 glycan"/>
</dbReference>
<dbReference type="GlyGen" id="Q7Z3C6">
    <property type="glycosylation" value="2 sites, 1 N-linked glycan (1 site), 1 O-linked glycan (1 site)"/>
</dbReference>
<dbReference type="iPTMnet" id="Q7Z3C6"/>
<dbReference type="PhosphoSitePlus" id="Q7Z3C6"/>
<dbReference type="SwissPalm" id="Q7Z3C6"/>
<dbReference type="BioMuta" id="ATG9A"/>
<dbReference type="DMDM" id="296439428"/>
<dbReference type="jPOST" id="Q7Z3C6"/>
<dbReference type="MassIVE" id="Q7Z3C6"/>
<dbReference type="PaxDb" id="9606-ENSP00000386710"/>
<dbReference type="PeptideAtlas" id="Q7Z3C6"/>
<dbReference type="ProteomicsDB" id="69026">
    <molecule id="Q7Z3C6-1"/>
</dbReference>
<dbReference type="ProteomicsDB" id="69027">
    <molecule id="Q7Z3C6-2"/>
</dbReference>
<dbReference type="ProteomicsDB" id="69028">
    <molecule id="Q7Z3C6-3"/>
</dbReference>
<dbReference type="Pumba" id="Q7Z3C6"/>
<dbReference type="Antibodypedia" id="34308">
    <property type="antibodies" value="440 antibodies from 39 providers"/>
</dbReference>
<dbReference type="DNASU" id="79065"/>
<dbReference type="Ensembl" id="ENST00000361242.9">
    <molecule id="Q7Z3C6-1"/>
    <property type="protein sequence ID" value="ENSP00000355173.4"/>
    <property type="gene ID" value="ENSG00000198925.12"/>
</dbReference>
<dbReference type="Ensembl" id="ENST00000396761.6">
    <molecule id="Q7Z3C6-1"/>
    <property type="protein sequence ID" value="ENSP00000379983.2"/>
    <property type="gene ID" value="ENSG00000198925.12"/>
</dbReference>
<dbReference type="Ensembl" id="ENST00000409033.7">
    <molecule id="Q7Z3C6-3"/>
    <property type="protein sequence ID" value="ENSP00000386482.3"/>
    <property type="gene ID" value="ENSG00000198925.12"/>
</dbReference>
<dbReference type="Ensembl" id="ENST00000409422.5">
    <molecule id="Q7Z3C6-2"/>
    <property type="protein sequence ID" value="ENSP00000386535.1"/>
    <property type="gene ID" value="ENSG00000198925.12"/>
</dbReference>
<dbReference type="Ensembl" id="ENST00000409618.5">
    <molecule id="Q7Z3C6-1"/>
    <property type="protein sequence ID" value="ENSP00000386710.1"/>
    <property type="gene ID" value="ENSG00000198925.12"/>
</dbReference>
<dbReference type="GeneID" id="79065"/>
<dbReference type="KEGG" id="hsa:79065"/>
<dbReference type="MANE-Select" id="ENST00000361242.9">
    <property type="protein sequence ID" value="ENSP00000355173.4"/>
    <property type="RefSeq nucleotide sequence ID" value="NM_001077198.3"/>
    <property type="RefSeq protein sequence ID" value="NP_001070666.1"/>
</dbReference>
<dbReference type="UCSC" id="uc002vke.3">
    <molecule id="Q7Z3C6-1"/>
    <property type="organism name" value="human"/>
</dbReference>
<dbReference type="AGR" id="HGNC:22408"/>
<dbReference type="CTD" id="79065"/>
<dbReference type="DisGeNET" id="79065"/>
<dbReference type="GeneCards" id="ATG9A"/>
<dbReference type="HGNC" id="HGNC:22408">
    <property type="gene designation" value="ATG9A"/>
</dbReference>
<dbReference type="HPA" id="ENSG00000198925">
    <property type="expression patterns" value="Low tissue specificity"/>
</dbReference>
<dbReference type="MIM" id="612204">
    <property type="type" value="gene"/>
</dbReference>
<dbReference type="neXtProt" id="NX_Q7Z3C6"/>
<dbReference type="OpenTargets" id="ENSG00000198925"/>
<dbReference type="PharmGKB" id="PA134931318"/>
<dbReference type="VEuPathDB" id="HostDB:ENSG00000198925"/>
<dbReference type="eggNOG" id="KOG2173">
    <property type="taxonomic scope" value="Eukaryota"/>
</dbReference>
<dbReference type="GeneTree" id="ENSGT00390000014839"/>
<dbReference type="HOGENOM" id="CLU_006200_2_2_1"/>
<dbReference type="InParanoid" id="Q7Z3C6"/>
<dbReference type="OMA" id="IPTGECV"/>
<dbReference type="OrthoDB" id="2020634at2759"/>
<dbReference type="PAN-GO" id="Q7Z3C6">
    <property type="GO annotations" value="5 GO annotations based on evolutionary models"/>
</dbReference>
<dbReference type="PhylomeDB" id="Q7Z3C6"/>
<dbReference type="TreeFam" id="TF313665"/>
<dbReference type="PathwayCommons" id="Q7Z3C6"/>
<dbReference type="Reactome" id="R-HSA-1632852">
    <property type="pathway name" value="Macroautophagy"/>
</dbReference>
<dbReference type="Reactome" id="R-HSA-5205685">
    <property type="pathway name" value="PINK1-PRKN Mediated Mitophagy"/>
</dbReference>
<dbReference type="SignaLink" id="Q7Z3C6"/>
<dbReference type="SIGNOR" id="Q7Z3C6"/>
<dbReference type="BioGRID-ORCS" id="79065">
    <property type="hits" value="138 hits in 1170 CRISPR screens"/>
</dbReference>
<dbReference type="ChiTaRS" id="ATG9A">
    <property type="organism name" value="human"/>
</dbReference>
<dbReference type="GeneWiki" id="ATG9A"/>
<dbReference type="GenomeRNAi" id="79065"/>
<dbReference type="Pharos" id="Q7Z3C6">
    <property type="development level" value="Tbio"/>
</dbReference>
<dbReference type="PRO" id="PR:Q7Z3C6"/>
<dbReference type="Proteomes" id="UP000005640">
    <property type="component" value="Chromosome 2"/>
</dbReference>
<dbReference type="RNAct" id="Q7Z3C6">
    <property type="molecule type" value="protein"/>
</dbReference>
<dbReference type="Bgee" id="ENSG00000198925">
    <property type="expression patterns" value="Expressed in gastrocnemius and 97 other cell types or tissues"/>
</dbReference>
<dbReference type="ExpressionAtlas" id="Q7Z3C6">
    <property type="expression patterns" value="baseline and differential"/>
</dbReference>
<dbReference type="GO" id="GO:0005776">
    <property type="term" value="C:autophagosome"/>
    <property type="evidence" value="ECO:0000318"/>
    <property type="project" value="GO_Central"/>
</dbReference>
<dbReference type="GO" id="GO:0005789">
    <property type="term" value="C:endoplasmic reticulum membrane"/>
    <property type="evidence" value="ECO:0000314"/>
    <property type="project" value="UniProtKB"/>
</dbReference>
<dbReference type="GO" id="GO:0005768">
    <property type="term" value="C:endosome"/>
    <property type="evidence" value="ECO:0000314"/>
    <property type="project" value="MGI"/>
</dbReference>
<dbReference type="GO" id="GO:0005794">
    <property type="term" value="C:Golgi apparatus"/>
    <property type="evidence" value="ECO:0000314"/>
    <property type="project" value="UniProtKB"/>
</dbReference>
<dbReference type="GO" id="GO:0000139">
    <property type="term" value="C:Golgi membrane"/>
    <property type="evidence" value="ECO:0000314"/>
    <property type="project" value="UniProtKB"/>
</dbReference>
<dbReference type="GO" id="GO:0043231">
    <property type="term" value="C:intracellular membrane-bounded organelle"/>
    <property type="evidence" value="ECO:0000314"/>
    <property type="project" value="HPA"/>
</dbReference>
<dbReference type="GO" id="GO:0005770">
    <property type="term" value="C:late endosome"/>
    <property type="evidence" value="ECO:0000314"/>
    <property type="project" value="MGI"/>
</dbReference>
<dbReference type="GO" id="GO:0031902">
    <property type="term" value="C:late endosome membrane"/>
    <property type="evidence" value="ECO:0007669"/>
    <property type="project" value="UniProtKB-SubCell"/>
</dbReference>
<dbReference type="GO" id="GO:0016020">
    <property type="term" value="C:membrane"/>
    <property type="evidence" value="ECO:0007005"/>
    <property type="project" value="UniProtKB"/>
</dbReference>
<dbReference type="GO" id="GO:0031966">
    <property type="term" value="C:mitochondrial membrane"/>
    <property type="evidence" value="ECO:0007669"/>
    <property type="project" value="UniProtKB-SubCell"/>
</dbReference>
<dbReference type="GO" id="GO:0005739">
    <property type="term" value="C:mitochondrion"/>
    <property type="evidence" value="ECO:0000314"/>
    <property type="project" value="UniProtKB"/>
</dbReference>
<dbReference type="GO" id="GO:0000407">
    <property type="term" value="C:phagophore assembly site"/>
    <property type="evidence" value="ECO:0000314"/>
    <property type="project" value="MGI"/>
</dbReference>
<dbReference type="GO" id="GO:0034045">
    <property type="term" value="C:phagophore assembly site membrane"/>
    <property type="evidence" value="ECO:0000304"/>
    <property type="project" value="Reactome"/>
</dbReference>
<dbReference type="GO" id="GO:0055037">
    <property type="term" value="C:recycling endosome"/>
    <property type="evidence" value="ECO:0000314"/>
    <property type="project" value="MGI"/>
</dbReference>
<dbReference type="GO" id="GO:0055038">
    <property type="term" value="C:recycling endosome membrane"/>
    <property type="evidence" value="ECO:0000314"/>
    <property type="project" value="UniProtKB"/>
</dbReference>
<dbReference type="GO" id="GO:0097060">
    <property type="term" value="C:synaptic membrane"/>
    <property type="evidence" value="ECO:0007669"/>
    <property type="project" value="Ensembl"/>
</dbReference>
<dbReference type="GO" id="GO:0005802">
    <property type="term" value="C:trans-Golgi network"/>
    <property type="evidence" value="ECO:0000314"/>
    <property type="project" value="UniProtKB"/>
</dbReference>
<dbReference type="GO" id="GO:0017128">
    <property type="term" value="F:phospholipid scramblase activity"/>
    <property type="evidence" value="ECO:0000314"/>
    <property type="project" value="UniProtKB"/>
</dbReference>
<dbReference type="GO" id="GO:0000045">
    <property type="term" value="P:autophagosome assembly"/>
    <property type="evidence" value="ECO:0000314"/>
    <property type="project" value="UniProtKB"/>
</dbReference>
<dbReference type="GO" id="GO:0060349">
    <property type="term" value="P:bone morphogenesis"/>
    <property type="evidence" value="ECO:0000250"/>
    <property type="project" value="UniProtKB"/>
</dbReference>
<dbReference type="GO" id="GO:0045087">
    <property type="term" value="P:innate immune response"/>
    <property type="evidence" value="ECO:0007669"/>
    <property type="project" value="Ensembl"/>
</dbReference>
<dbReference type="GO" id="GO:0000423">
    <property type="term" value="P:mitophagy"/>
    <property type="evidence" value="ECO:0000318"/>
    <property type="project" value="GO_Central"/>
</dbReference>
<dbReference type="GO" id="GO:0032688">
    <property type="term" value="P:negative regulation of interferon-beta production"/>
    <property type="evidence" value="ECO:0007669"/>
    <property type="project" value="Ensembl"/>
</dbReference>
<dbReference type="GO" id="GO:0010936">
    <property type="term" value="P:negative regulation of macrophage cytokine production"/>
    <property type="evidence" value="ECO:0007669"/>
    <property type="project" value="Ensembl"/>
</dbReference>
<dbReference type="GO" id="GO:0034727">
    <property type="term" value="P:piecemeal microautophagy of the nucleus"/>
    <property type="evidence" value="ECO:0000318"/>
    <property type="project" value="GO_Central"/>
</dbReference>
<dbReference type="GO" id="GO:0097300">
    <property type="term" value="P:programmed necrotic cell death"/>
    <property type="evidence" value="ECO:0000250"/>
    <property type="project" value="UniProtKB"/>
</dbReference>
<dbReference type="GO" id="GO:0034067">
    <property type="term" value="P:protein localization to Golgi apparatus"/>
    <property type="evidence" value="ECO:0007669"/>
    <property type="project" value="Ensembl"/>
</dbReference>
<dbReference type="GO" id="GO:0034497">
    <property type="term" value="P:protein localization to phagophore assembly site"/>
    <property type="evidence" value="ECO:0000318"/>
    <property type="project" value="GO_Central"/>
</dbReference>
<dbReference type="GO" id="GO:0061709">
    <property type="term" value="P:reticulophagy"/>
    <property type="evidence" value="ECO:0000318"/>
    <property type="project" value="GO_Central"/>
</dbReference>
<dbReference type="DisProt" id="DP01730"/>
<dbReference type="InterPro" id="IPR007241">
    <property type="entry name" value="Autophagy-rel_prot_9"/>
</dbReference>
<dbReference type="PANTHER" id="PTHR13038">
    <property type="entry name" value="APG9 AUTOPHAGY 9"/>
    <property type="match status" value="1"/>
</dbReference>
<dbReference type="PANTHER" id="PTHR13038:SF13">
    <property type="entry name" value="AUTOPHAGY-RELATED PROTEIN 9A"/>
    <property type="match status" value="1"/>
</dbReference>
<dbReference type="Pfam" id="PF04109">
    <property type="entry name" value="ATG9"/>
    <property type="match status" value="1"/>
</dbReference>
<comment type="function">
    <text evidence="1 5 12 14 17 19 21 22 23 24 26">Phospholipid scramblase involved in autophagy by mediating autophagosomal membrane expansion (PubMed:22456507, PubMed:27510922, PubMed:29437695, PubMed:32513819, PubMed:32610138, PubMed:33106659, PubMed:33468622, PubMed:33850023). Cycles between the preautophagosomal structure/phagophore assembly site (PAS) and the cytoplasmic vesicle pool and supplies membrane for the growing autophagosome (PubMed:16940348, PubMed:22456507, PubMed:33106659). Lipid scramblase activity plays a key role in preautophagosomal structure/phagophore assembly by distributing the phospholipids that arrive through ATG2 (ATG2A or ATG2B) from the cytoplasmic to the luminal leaflet of the bilayer, thereby driving autophagosomal membrane expansion (PubMed:33106659). Also required to supply phosphatidylinositol 4-phosphate to the autophagosome initiation site by recruiting the phosphatidylinositol 4-kinase beta (PI4KB) in a process dependent on ARFIP2, but not ARFIP1 (PubMed:30917996). In addition to autophagy, also plays a role in necrotic cell death (By similarity).</text>
</comment>
<comment type="catalytic activity">
    <reaction evidence="23 26">
        <text>a 1,2-diacyl-sn-glycero-3-phosphocholine(in) = a 1,2-diacyl-sn-glycero-3-phosphocholine(out)</text>
        <dbReference type="Rhea" id="RHEA:38571"/>
        <dbReference type="ChEBI" id="CHEBI:57643"/>
    </reaction>
</comment>
<comment type="catalytic activity">
    <reaction evidence="23 26">
        <text>a 1,2-diacyl-sn-glycero-3-phospho-L-serine(in) = a 1,2-diacyl-sn-glycero-3-phospho-L-serine(out)</text>
        <dbReference type="Rhea" id="RHEA:38663"/>
        <dbReference type="ChEBI" id="CHEBI:57262"/>
    </reaction>
</comment>
<comment type="catalytic activity">
    <reaction evidence="23 26">
        <text>a 1,2-diacyl-sn-glycero-3-phosphoethanolamine(in) = a 1,2-diacyl-sn-glycero-3-phosphoethanolamine(out)</text>
        <dbReference type="Rhea" id="RHEA:38895"/>
        <dbReference type="ChEBI" id="CHEBI:64612"/>
    </reaction>
</comment>
<comment type="subunit">
    <text evidence="8 16 19 22 23 25">Homotrimer; forms a homotrimer with a central pore that forms a path between the two membrane leaflets (PubMed:32610138, PubMed:33106659). Interacts (via cytoplasmic its C-terminus) with ATG2A (PubMed:32610138, PubMed:33106659). Interacts with SUPT20H (PubMed:19893488). Interacts (via the tyrosine-based sorting signal motif) with AP4M1; promoting association with the AP-4 complex (PubMed:29180427). Interacts with ARFIP1 and ARFIP2 (PubMed:30917996). Interacts with PI4K2A and PI4KB (PubMed:30917996). Interacts with ATG4A; the interaction is direct and promotes ATG9A trafficking (PubMed:33773106).</text>
</comment>
<comment type="interaction">
    <interactant intactId="EBI-727146">
        <id>Q7Z3C6</id>
    </interactant>
    <interactant intactId="EBI-297683">
        <id>Q96CW1</id>
        <label>AP2M1</label>
    </interactant>
    <organismsDiffer>false</organismsDiffer>
    <experiments>22</experiments>
</comment>
<comment type="interaction">
    <interactant intactId="EBI-727146">
        <id>Q7Z3C6</id>
    </interactant>
    <interactant intactId="EBI-2514077">
        <id>Q2TAZ0</id>
        <label>ATG2A</label>
    </interactant>
    <organismsDiffer>false</organismsDiffer>
    <experiments>4</experiments>
</comment>
<comment type="interaction">
    <interactant intactId="EBI-727146">
        <id>Q7Z3C6</id>
    </interactant>
    <interactant intactId="EBI-948001">
        <id>Q15323</id>
        <label>KRT31</label>
    </interactant>
    <organismsDiffer>false</organismsDiffer>
    <experiments>3</experiments>
</comment>
<comment type="interaction">
    <interactant intactId="EBI-727146">
        <id>Q7Z3C6</id>
    </interactant>
    <interactant intactId="EBI-10171774">
        <id>P60410</id>
        <label>KRTAP10-8</label>
    </interactant>
    <organismsDiffer>false</organismsDiffer>
    <experiments>3</experiments>
</comment>
<comment type="interaction">
    <interactant intactId="EBI-727146">
        <id>Q7Z3C6</id>
    </interactant>
    <interactant intactId="EBI-10172511">
        <id>Q9BYR5</id>
        <label>KRTAP4-2</label>
    </interactant>
    <organismsDiffer>false</organismsDiffer>
    <experiments>3</experiments>
</comment>
<comment type="interaction">
    <interactant intactId="EBI-727146">
        <id>Q7Z3C6</id>
    </interactant>
    <interactant intactId="EBI-3958099">
        <id>P26371</id>
        <label>KRTAP5-9</label>
    </interactant>
    <organismsDiffer>false</organismsDiffer>
    <experiments>3</experiments>
</comment>
<comment type="interaction">
    <interactant intactId="EBI-727146">
        <id>Q7Z3C6</id>
    </interactant>
    <interactant intactId="EBI-2341787">
        <id>Q17RB8</id>
        <label>LONRF1</label>
    </interactant>
    <organismsDiffer>false</organismsDiffer>
    <experiments>3</experiments>
</comment>
<comment type="interaction">
    <interactant intactId="EBI-727146">
        <id>Q7Z3C6</id>
    </interactant>
    <interactant intactId="EBI-945833">
        <id>Q7Z3S9</id>
        <label>NOTCH2NLA</label>
    </interactant>
    <organismsDiffer>false</organismsDiffer>
    <experiments>3</experiments>
</comment>
<comment type="interaction">
    <interactant intactId="EBI-727146">
        <id>Q7Z3C6</id>
    </interactant>
    <interactant intactId="EBI-307352">
        <id>Q04864</id>
        <label>REL</label>
    </interactant>
    <organismsDiffer>false</organismsDiffer>
    <experiments>3</experiments>
</comment>
<comment type="interaction">
    <interactant intactId="EBI-727146">
        <id>Q7Z3C6</id>
    </interactant>
    <interactant intactId="EBI-7568679">
        <id>Q8NEM7-2</id>
        <label>SUPT20H</label>
    </interactant>
    <organismsDiffer>false</organismsDiffer>
    <experiments>8</experiments>
</comment>
<comment type="interaction">
    <interactant intactId="EBI-727146">
        <id>Q7Z3C6</id>
    </interactant>
    <interactant intactId="EBI-356402">
        <id>Q9UHD2</id>
        <label>TBK1</label>
    </interactant>
    <organismsDiffer>false</organismsDiffer>
    <experiments>2</experiments>
</comment>
<comment type="interaction">
    <interactant intactId="EBI-727146">
        <id>Q7Z3C6</id>
    </interactant>
    <interactant intactId="EBI-10175863">
        <id>Q05086-2</id>
        <label>UBE3A</label>
    </interactant>
    <organismsDiffer>false</organismsDiffer>
    <experiments>3</experiments>
</comment>
<comment type="interaction">
    <interactant intactId="EBI-12006308">
        <id>Q7Z3C6-3</id>
    </interactant>
    <interactant intactId="EBI-10173507">
        <id>Q6UY14-3</id>
        <label>ADAMTSL4</label>
    </interactant>
    <organismsDiffer>false</organismsDiffer>
    <experiments>3</experiments>
</comment>
<comment type="interaction">
    <interactant intactId="EBI-12006308">
        <id>Q7Z3C6-3</id>
    </interactant>
    <interactant intactId="EBI-12102070">
        <id>Q9NXR5-2</id>
        <label>ANKRD10</label>
    </interactant>
    <organismsDiffer>false</organismsDiffer>
    <experiments>3</experiments>
</comment>
<comment type="interaction">
    <interactant intactId="EBI-12006308">
        <id>Q7Z3C6-3</id>
    </interactant>
    <interactant intactId="EBI-12261896">
        <id>Q5T4B2</id>
        <label>CERCAM</label>
    </interactant>
    <organismsDiffer>false</organismsDiffer>
    <experiments>3</experiments>
</comment>
<comment type="interaction">
    <interactant intactId="EBI-12006308">
        <id>Q7Z3C6-3</id>
    </interactant>
    <interactant intactId="EBI-718615">
        <id>Q9H5F2</id>
        <label>CFAP68</label>
    </interactant>
    <organismsDiffer>false</organismsDiffer>
    <experiments>3</experiments>
</comment>
<comment type="interaction">
    <interactant intactId="EBI-12006308">
        <id>Q7Z3C6-3</id>
    </interactant>
    <interactant intactId="EBI-12868028">
        <id>A0PJX0</id>
        <label>CIB4</label>
    </interactant>
    <organismsDiffer>false</organismsDiffer>
    <experiments>5</experiments>
</comment>
<comment type="interaction">
    <interactant intactId="EBI-12006308">
        <id>Q7Z3C6-3</id>
    </interactant>
    <interactant intactId="EBI-3867333">
        <id>A8MQ03</id>
        <label>CYSRT1</label>
    </interactant>
    <organismsDiffer>false</organismsDiffer>
    <experiments>3</experiments>
</comment>
<comment type="interaction">
    <interactant intactId="EBI-12006308">
        <id>Q7Z3C6-3</id>
    </interactant>
    <interactant intactId="EBI-715318">
        <id>O95571</id>
        <label>ETHE1</label>
    </interactant>
    <organismsDiffer>false</organismsDiffer>
    <experiments>3</experiments>
</comment>
<comment type="interaction">
    <interactant intactId="EBI-12006308">
        <id>Q7Z3C6-3</id>
    </interactant>
    <interactant intactId="EBI-11102276">
        <id>Q9HD26-2</id>
        <label>GOPC</label>
    </interactant>
    <organismsDiffer>false</organismsDiffer>
    <experiments>5</experiments>
</comment>
<comment type="interaction">
    <interactant intactId="EBI-12006308">
        <id>Q7Z3C6-3</id>
    </interactant>
    <interactant intactId="EBI-745201">
        <id>Q9BSH5</id>
        <label>HDHD3</label>
    </interactant>
    <organismsDiffer>false</organismsDiffer>
    <experiments>3</experiments>
</comment>
<comment type="interaction">
    <interactant intactId="EBI-12006308">
        <id>Q7Z3C6-3</id>
    </interactant>
    <interactant intactId="EBI-10693436">
        <id>Q9BS75</id>
        <label>KLHL20</label>
    </interactant>
    <organismsDiffer>false</organismsDiffer>
    <experiments>3</experiments>
</comment>
<comment type="interaction">
    <interactant intactId="EBI-12006308">
        <id>Q7Z3C6-3</id>
    </interactant>
    <interactant intactId="EBI-10981970">
        <id>Q5T749</id>
        <label>KPRP</label>
    </interactant>
    <organismsDiffer>false</organismsDiffer>
    <experiments>5</experiments>
</comment>
<comment type="interaction">
    <interactant intactId="EBI-12006308">
        <id>Q7Z3C6-3</id>
    </interactant>
    <interactant intactId="EBI-948001">
        <id>Q15323</id>
        <label>KRT31</label>
    </interactant>
    <organismsDiffer>false</organismsDiffer>
    <experiments>3</experiments>
</comment>
<comment type="interaction">
    <interactant intactId="EBI-12006308">
        <id>Q7Z3C6-3</id>
    </interactant>
    <interactant intactId="EBI-1049638">
        <id>Q14525</id>
        <label>KRT33B</label>
    </interactant>
    <organismsDiffer>false</organismsDiffer>
    <experiments>3</experiments>
</comment>
<comment type="interaction">
    <interactant intactId="EBI-12006308">
        <id>Q7Z3C6-3</id>
    </interactant>
    <interactant intactId="EBI-1047093">
        <id>O76011</id>
        <label>KRT34</label>
    </interactant>
    <organismsDiffer>false</organismsDiffer>
    <experiments>3</experiments>
</comment>
<comment type="interaction">
    <interactant intactId="EBI-12006308">
        <id>Q7Z3C6-3</id>
    </interactant>
    <interactant intactId="EBI-1058674">
        <id>Q92764</id>
        <label>KRT35</label>
    </interactant>
    <organismsDiffer>false</organismsDiffer>
    <experiments>3</experiments>
</comment>
<comment type="interaction">
    <interactant intactId="EBI-12006308">
        <id>Q7Z3C6-3</id>
    </interactant>
    <interactant intactId="EBI-11959885">
        <id>Q07627</id>
        <label>KRTAP1-1</label>
    </interactant>
    <organismsDiffer>false</organismsDiffer>
    <experiments>3</experiments>
</comment>
<comment type="interaction">
    <interactant intactId="EBI-12006308">
        <id>Q7Z3C6-3</id>
    </interactant>
    <interactant intactId="EBI-11749135">
        <id>Q8IUG1</id>
        <label>KRTAP1-3</label>
    </interactant>
    <organismsDiffer>false</organismsDiffer>
    <experiments>3</experiments>
</comment>
<comment type="interaction">
    <interactant intactId="EBI-12006308">
        <id>Q7Z3C6-3</id>
    </interactant>
    <interactant intactId="EBI-10171774">
        <id>P60410</id>
        <label>KRTAP10-8</label>
    </interactant>
    <organismsDiffer>false</organismsDiffer>
    <experiments>5</experiments>
</comment>
<comment type="interaction">
    <interactant intactId="EBI-12006308">
        <id>Q7Z3C6-3</id>
    </interactant>
    <interactant intactId="EBI-1052037">
        <id>Q8IUC1</id>
        <label>KRTAP11-1</label>
    </interactant>
    <organismsDiffer>false</organismsDiffer>
    <experiments>3</experiments>
</comment>
<comment type="interaction">
    <interactant intactId="EBI-12006308">
        <id>Q7Z3C6-3</id>
    </interactant>
    <interactant intactId="EBI-10241252">
        <id>Q3SY46</id>
        <label>KRTAP13-3</label>
    </interactant>
    <organismsDiffer>false</organismsDiffer>
    <experiments>5</experiments>
</comment>
<comment type="interaction">
    <interactant intactId="EBI-12006308">
        <id>Q7Z3C6-3</id>
    </interactant>
    <interactant intactId="EBI-12811111">
        <id>Q8IUB9</id>
        <label>KRTAP19-1</label>
    </interactant>
    <organismsDiffer>false</organismsDiffer>
    <experiments>3</experiments>
</comment>
<comment type="interaction">
    <interactant intactId="EBI-12006308">
        <id>Q7Z3C6-3</id>
    </interactant>
    <interactant intactId="EBI-751260">
        <id>Q9BYR7</id>
        <label>KRTAP3-2</label>
    </interactant>
    <organismsDiffer>false</organismsDiffer>
    <experiments>3</experiments>
</comment>
<comment type="interaction">
    <interactant intactId="EBI-12006308">
        <id>Q7Z3C6-3</id>
    </interactant>
    <interactant intactId="EBI-3957694">
        <id>Q9BYR6</id>
        <label>KRTAP3-3</label>
    </interactant>
    <organismsDiffer>false</organismsDiffer>
    <experiments>3</experiments>
</comment>
<comment type="interaction">
    <interactant intactId="EBI-12006308">
        <id>Q7Z3C6-3</id>
    </interactant>
    <interactant intactId="EBI-11962084">
        <id>Q3LI66</id>
        <label>KRTAP6-2</label>
    </interactant>
    <organismsDiffer>false</organismsDiffer>
    <experiments>5</experiments>
</comment>
<comment type="interaction">
    <interactant intactId="EBI-12006308">
        <id>Q7Z3C6-3</id>
    </interactant>
    <interactant intactId="EBI-10261141">
        <id>Q8IUC2</id>
        <label>KRTAP8-1</label>
    </interactant>
    <organismsDiffer>false</organismsDiffer>
    <experiments>3</experiments>
</comment>
<comment type="interaction">
    <interactant intactId="EBI-12006308">
        <id>Q7Z3C6-3</id>
    </interactant>
    <interactant intactId="EBI-1044640">
        <id>Q9BYQ4</id>
        <label>KRTAP9-2</label>
    </interactant>
    <organismsDiffer>false</organismsDiffer>
    <experiments>3</experiments>
</comment>
<comment type="interaction">
    <interactant intactId="EBI-12006308">
        <id>Q7Z3C6-3</id>
    </interactant>
    <interactant intactId="EBI-2864512">
        <id>P50221</id>
        <label>MEOX1</label>
    </interactant>
    <organismsDiffer>false</organismsDiffer>
    <experiments>3</experiments>
</comment>
<comment type="interaction">
    <interactant intactId="EBI-12006308">
        <id>Q7Z3C6-3</id>
    </interactant>
    <interactant intactId="EBI-16439278">
        <id>Q6FHY5</id>
        <label>MEOX2</label>
    </interactant>
    <organismsDiffer>false</organismsDiffer>
    <experiments>3</experiments>
</comment>
<comment type="interaction">
    <interactant intactId="EBI-12006308">
        <id>Q7Z3C6-3</id>
    </interactant>
    <interactant intactId="EBI-1246238">
        <id>P17568</id>
        <label>NDUFB7</label>
    </interactant>
    <organismsDiffer>false</organismsDiffer>
    <experiments>3</experiments>
</comment>
<comment type="interaction">
    <interactant intactId="EBI-12006308">
        <id>Q7Z3C6-3</id>
    </interactant>
    <interactant intactId="EBI-22310682">
        <id>P0DPK4</id>
        <label>NOTCH2NLC</label>
    </interactant>
    <organismsDiffer>false</organismsDiffer>
    <experiments>3</experiments>
</comment>
<comment type="interaction">
    <interactant intactId="EBI-12006308">
        <id>Q7Z3C6-3</id>
    </interactant>
    <interactant intactId="EBI-12813389">
        <id>Q8TDS5</id>
        <label>OXER1</label>
    </interactant>
    <organismsDiffer>false</organismsDiffer>
    <experiments>3</experiments>
</comment>
<comment type="interaction">
    <interactant intactId="EBI-12006308">
        <id>Q7Z3C6-3</id>
    </interactant>
    <interactant intactId="EBI-10829018">
        <id>Q04864-2</id>
        <label>REL</label>
    </interactant>
    <organismsDiffer>false</organismsDiffer>
    <experiments>3</experiments>
</comment>
<comment type="interaction">
    <interactant intactId="EBI-12006308">
        <id>Q7Z3C6-3</id>
    </interactant>
    <interactant intactId="EBI-13636688">
        <id>P15884-3</id>
        <label>TCF4</label>
    </interactant>
    <organismsDiffer>false</organismsDiffer>
    <experiments>3</experiments>
</comment>
<comment type="interaction">
    <interactant intactId="EBI-12006308">
        <id>Q7Z3C6-3</id>
    </interactant>
    <interactant intactId="EBI-5235829">
        <id>Q8IWZ5</id>
        <label>TRIM42</label>
    </interactant>
    <organismsDiffer>false</organismsDiffer>
    <experiments>3</experiments>
</comment>
<comment type="interaction">
    <interactant intactId="EBI-12006308">
        <id>Q7Z3C6-3</id>
    </interactant>
    <interactant intactId="EBI-12287587">
        <id>B2RXF5</id>
        <label>ZBTB42</label>
    </interactant>
    <organismsDiffer>false</organismsDiffer>
    <experiments>3</experiments>
</comment>
<comment type="interaction">
    <interactant intactId="EBI-12006308">
        <id>Q7Z3C6-3</id>
    </interactant>
    <interactant intactId="EBI-745520">
        <id>Q9P0T4</id>
        <label>ZNF581</label>
    </interactant>
    <organismsDiffer>false</organismsDiffer>
    <experiments>3</experiments>
</comment>
<comment type="interaction">
    <interactant intactId="EBI-12006308">
        <id>Q7Z3C6-3</id>
    </interactant>
    <interactant intactId="EBI-4395669">
        <id>Q6ZNG0</id>
        <label>ZNF620</label>
    </interactant>
    <organismsDiffer>false</organismsDiffer>
    <experiments>3</experiments>
</comment>
<comment type="subcellular location">
    <subcellularLocation>
        <location evidence="7 20 23">Preautophagosomal structure membrane</location>
        <topology evidence="22 23">Multi-pass membrane protein</topology>
    </subcellularLocation>
    <subcellularLocation>
        <location evidence="9">Cytoplasmic vesicle</location>
        <location evidence="9">Autophagosome membrane</location>
        <topology evidence="22 23">Multi-pass membrane protein</topology>
    </subcellularLocation>
    <subcellularLocation>
        <location evidence="5 10 11 13 15 16 24 35">Golgi apparatus</location>
        <location evidence="5 10 11 13 15 16 24 35">trans-Golgi network membrane</location>
        <topology evidence="22 23">Multi-pass membrane protein</topology>
    </subcellularLocation>
    <subcellularLocation>
        <location evidence="5 10 12 21 24">Late endosome membrane</location>
        <topology evidence="22 23">Multi-pass membrane protein</topology>
    </subcellularLocation>
    <subcellularLocation>
        <location evidence="12 17">Recycling endosome membrane</location>
        <topology evidence="22 23">Multi-pass membrane protein</topology>
    </subcellularLocation>
    <subcellularLocation>
        <location evidence="10 13 15">Endoplasmic reticulum membrane</location>
        <topology evidence="22 23">Multi-pass membrane protein</topology>
    </subcellularLocation>
    <subcellularLocation>
        <location evidence="35">Mitochondrion membrane</location>
        <topology evidence="2">Multi-pass membrane protein</topology>
    </subcellularLocation>
    <text evidence="5 12 13 15 16 18 27">Mainly localizes to the trans-Golgi network (TGN) and the endosomal system; cycles between them though vesicle trafficking (PubMed:27316455, PubMed:27663665). Export from the TGN to promote formation of autophagosomes is mediated by the AP-4 complex (PubMed:29180427, PubMed:30262884). Under amino acid starvation or rapamycin treatment, redistributes to preautophagosomal structure/phagophore assembly site (PAS) (PubMed:16940348). The starvation-induced redistribution depends on ULK1, ATG13, as well as SH3GLB1 (PubMed:16940348). Upon autophagy induction, a small portion transiently localizes to the autophagic membranes (PubMed:22456507). Recruited to damaged mitochondria during mitophagy in a RIMOC1-dependent manner (PubMed:34432599).</text>
</comment>
<comment type="alternative products">
    <event type="alternative splicing"/>
    <isoform>
        <id>Q7Z3C6-1</id>
        <name>1</name>
        <sequence type="displayed"/>
    </isoform>
    <isoform>
        <id>Q7Z3C6-2</id>
        <name>2</name>
        <sequence type="described" ref="VSP_013396"/>
    </isoform>
    <isoform>
        <id>Q7Z3C6-3</id>
        <name>3</name>
        <sequence type="described" ref="VSP_013397 VSP_013398"/>
    </isoform>
</comment>
<comment type="domain">
    <text evidence="22 23">Forms a homotrimer with a solvated central pore, which is connected laterally to the cytosol through the cavity within each protomer (PubMed:32610138, PubMed:33106659). Acts as a lipid scramblase that uses its central pore to function: the central pore opens laterally to accommodate lipid headgroups, thereby enabling lipid flipping and redistribution of lipids added to the outer leaflet of ATG9A-containing vesicles, thereby enabling growth into autophagosomes (PubMed:33106659).</text>
</comment>
<comment type="domain">
    <text evidence="16">The tyrosine-based sorting signal motif, also named YXX-psi motif, promotes interaction with the AP-4 complex.</text>
</comment>
<comment type="PTM">
    <text evidence="1">Ufmylated in a DDRGK1 dependent manner.</text>
</comment>
<comment type="miscellaneous">
    <molecule>Isoform 3</molecule>
    <text evidence="34">May be produced at very low levels due to a premature stop codon in the mRNA, leading to nonsense-mediated mRNA decay.</text>
</comment>
<comment type="similarity">
    <text evidence="34">Belongs to the ATG9 family.</text>
</comment>
<comment type="sequence caution" evidence="34">
    <conflict type="erroneous initiation">
        <sequence resource="EMBL-CDS" id="BAB13882"/>
    </conflict>
    <text>Truncated N-terminus.</text>
</comment>
<comment type="sequence caution" evidence="34">
    <conflict type="erroneous initiation">
        <sequence resource="EMBL-CDS" id="BAB15246"/>
    </conflict>
    <text>Truncated N-terminus.</text>
</comment>
<comment type="sequence caution" evidence="34">
    <conflict type="erroneous initiation">
        <sequence resource="EMBL-CDS" id="BAB55119"/>
    </conflict>
    <text>Truncated N-terminus.</text>
</comment>
<organism>
    <name type="scientific">Homo sapiens</name>
    <name type="common">Human</name>
    <dbReference type="NCBI Taxonomy" id="9606"/>
    <lineage>
        <taxon>Eukaryota</taxon>
        <taxon>Metazoa</taxon>
        <taxon>Chordata</taxon>
        <taxon>Craniata</taxon>
        <taxon>Vertebrata</taxon>
        <taxon>Euteleostomi</taxon>
        <taxon>Mammalia</taxon>
        <taxon>Eutheria</taxon>
        <taxon>Euarchontoglires</taxon>
        <taxon>Primates</taxon>
        <taxon>Haplorrhini</taxon>
        <taxon>Catarrhini</taxon>
        <taxon>Hominidae</taxon>
        <taxon>Homo</taxon>
    </lineage>
</organism>
<proteinExistence type="evidence at protein level"/>
<keyword id="KW-0002">3D-structure</keyword>
<keyword id="KW-0007">Acetylation</keyword>
<keyword id="KW-0025">Alternative splicing</keyword>
<keyword id="KW-0072">Autophagy</keyword>
<keyword id="KW-0968">Cytoplasmic vesicle</keyword>
<keyword id="KW-0256">Endoplasmic reticulum</keyword>
<keyword id="KW-0967">Endosome</keyword>
<keyword id="KW-0325">Glycoprotein</keyword>
<keyword id="KW-0333">Golgi apparatus</keyword>
<keyword id="KW-0445">Lipid transport</keyword>
<keyword id="KW-0472">Membrane</keyword>
<keyword id="KW-0496">Mitochondrion</keyword>
<keyword id="KW-0597">Phosphoprotein</keyword>
<keyword id="KW-1267">Proteomics identification</keyword>
<keyword id="KW-1185">Reference proteome</keyword>
<keyword id="KW-0812">Transmembrane</keyword>
<keyword id="KW-1133">Transmembrane helix</keyword>
<keyword id="KW-0813">Transport</keyword>
<keyword id="KW-0832">Ubl conjugation</keyword>
<reference key="1">
    <citation type="journal article" date="2007" name="BMC Genomics">
        <title>The full-ORF clone resource of the German cDNA consortium.</title>
        <authorList>
            <person name="Bechtel S."/>
            <person name="Rosenfelder H."/>
            <person name="Duda A."/>
            <person name="Schmidt C.P."/>
            <person name="Ernst U."/>
            <person name="Wellenreuther R."/>
            <person name="Mehrle A."/>
            <person name="Schuster C."/>
            <person name="Bahr A."/>
            <person name="Bloecker H."/>
            <person name="Heubner D."/>
            <person name="Hoerlein A."/>
            <person name="Michel G."/>
            <person name="Wedler H."/>
            <person name="Koehrer K."/>
            <person name="Ottenwaelder B."/>
            <person name="Poustka A."/>
            <person name="Wiemann S."/>
            <person name="Schupp I."/>
        </authorList>
    </citation>
    <scope>NUCLEOTIDE SEQUENCE [LARGE SCALE MRNA] (ISOFORMS 1 AND 2)</scope>
    <scope>VARIANT GLY-592</scope>
    <source>
        <tissue>Fetal brain</tissue>
        <tissue>Lung endothelial cell</tissue>
        <tissue>Rectum tumor</tissue>
        <tissue>Testis</tissue>
    </source>
</reference>
<reference key="2">
    <citation type="journal article" date="2005" name="Nature">
        <title>Generation and annotation of the DNA sequences of human chromosomes 2 and 4.</title>
        <authorList>
            <person name="Hillier L.W."/>
            <person name="Graves T.A."/>
            <person name="Fulton R.S."/>
            <person name="Fulton L.A."/>
            <person name="Pepin K.H."/>
            <person name="Minx P."/>
            <person name="Wagner-McPherson C."/>
            <person name="Layman D."/>
            <person name="Wylie K."/>
            <person name="Sekhon M."/>
            <person name="Becker M.C."/>
            <person name="Fewell G.A."/>
            <person name="Delehaunty K.D."/>
            <person name="Miner T.L."/>
            <person name="Nash W.E."/>
            <person name="Kremitzki C."/>
            <person name="Oddy L."/>
            <person name="Du H."/>
            <person name="Sun H."/>
            <person name="Bradshaw-Cordum H."/>
            <person name="Ali J."/>
            <person name="Carter J."/>
            <person name="Cordes M."/>
            <person name="Harris A."/>
            <person name="Isak A."/>
            <person name="van Brunt A."/>
            <person name="Nguyen C."/>
            <person name="Du F."/>
            <person name="Courtney L."/>
            <person name="Kalicki J."/>
            <person name="Ozersky P."/>
            <person name="Abbott S."/>
            <person name="Armstrong J."/>
            <person name="Belter E.A."/>
            <person name="Caruso L."/>
            <person name="Cedroni M."/>
            <person name="Cotton M."/>
            <person name="Davidson T."/>
            <person name="Desai A."/>
            <person name="Elliott G."/>
            <person name="Erb T."/>
            <person name="Fronick C."/>
            <person name="Gaige T."/>
            <person name="Haakenson W."/>
            <person name="Haglund K."/>
            <person name="Holmes A."/>
            <person name="Harkins R."/>
            <person name="Kim K."/>
            <person name="Kruchowski S.S."/>
            <person name="Strong C.M."/>
            <person name="Grewal N."/>
            <person name="Goyea E."/>
            <person name="Hou S."/>
            <person name="Levy A."/>
            <person name="Martinka S."/>
            <person name="Mead K."/>
            <person name="McLellan M.D."/>
            <person name="Meyer R."/>
            <person name="Randall-Maher J."/>
            <person name="Tomlinson C."/>
            <person name="Dauphin-Kohlberg S."/>
            <person name="Kozlowicz-Reilly A."/>
            <person name="Shah N."/>
            <person name="Swearengen-Shahid S."/>
            <person name="Snider J."/>
            <person name="Strong J.T."/>
            <person name="Thompson J."/>
            <person name="Yoakum M."/>
            <person name="Leonard S."/>
            <person name="Pearman C."/>
            <person name="Trani L."/>
            <person name="Radionenko M."/>
            <person name="Waligorski J.E."/>
            <person name="Wang C."/>
            <person name="Rock S.M."/>
            <person name="Tin-Wollam A.-M."/>
            <person name="Maupin R."/>
            <person name="Latreille P."/>
            <person name="Wendl M.C."/>
            <person name="Yang S.-P."/>
            <person name="Pohl C."/>
            <person name="Wallis J.W."/>
            <person name="Spieth J."/>
            <person name="Bieri T.A."/>
            <person name="Berkowicz N."/>
            <person name="Nelson J.O."/>
            <person name="Osborne J."/>
            <person name="Ding L."/>
            <person name="Meyer R."/>
            <person name="Sabo A."/>
            <person name="Shotland Y."/>
            <person name="Sinha P."/>
            <person name="Wohldmann P.E."/>
            <person name="Cook L.L."/>
            <person name="Hickenbotham M.T."/>
            <person name="Eldred J."/>
            <person name="Williams D."/>
            <person name="Jones T.A."/>
            <person name="She X."/>
            <person name="Ciccarelli F.D."/>
            <person name="Izaurralde E."/>
            <person name="Taylor J."/>
            <person name="Schmutz J."/>
            <person name="Myers R.M."/>
            <person name="Cox D.R."/>
            <person name="Huang X."/>
            <person name="McPherson J.D."/>
            <person name="Mardis E.R."/>
            <person name="Clifton S.W."/>
            <person name="Warren W.C."/>
            <person name="Chinwalla A.T."/>
            <person name="Eddy S.R."/>
            <person name="Marra M.A."/>
            <person name="Ovcharenko I."/>
            <person name="Furey T.S."/>
            <person name="Miller W."/>
            <person name="Eichler E.E."/>
            <person name="Bork P."/>
            <person name="Suyama M."/>
            <person name="Torrents D."/>
            <person name="Waterston R.H."/>
            <person name="Wilson R.K."/>
        </authorList>
    </citation>
    <scope>NUCLEOTIDE SEQUENCE [LARGE SCALE GENOMIC DNA]</scope>
</reference>
<reference key="3">
    <citation type="submission" date="2005-07" db="EMBL/GenBank/DDBJ databases">
        <authorList>
            <person name="Mural R.J."/>
            <person name="Istrail S."/>
            <person name="Sutton G.G."/>
            <person name="Florea L."/>
            <person name="Halpern A.L."/>
            <person name="Mobarry C.M."/>
            <person name="Lippert R."/>
            <person name="Walenz B."/>
            <person name="Shatkay H."/>
            <person name="Dew I."/>
            <person name="Miller J.R."/>
            <person name="Flanigan M.J."/>
            <person name="Edwards N.J."/>
            <person name="Bolanos R."/>
            <person name="Fasulo D."/>
            <person name="Halldorsson B.V."/>
            <person name="Hannenhalli S."/>
            <person name="Turner R."/>
            <person name="Yooseph S."/>
            <person name="Lu F."/>
            <person name="Nusskern D.R."/>
            <person name="Shue B.C."/>
            <person name="Zheng X.H."/>
            <person name="Zhong F."/>
            <person name="Delcher A.L."/>
            <person name="Huson D.H."/>
            <person name="Kravitz S.A."/>
            <person name="Mouchard L."/>
            <person name="Reinert K."/>
            <person name="Remington K.A."/>
            <person name="Clark A.G."/>
            <person name="Waterman M.S."/>
            <person name="Eichler E.E."/>
            <person name="Adams M.D."/>
            <person name="Hunkapiller M.W."/>
            <person name="Myers E.W."/>
            <person name="Venter J.C."/>
        </authorList>
    </citation>
    <scope>NUCLEOTIDE SEQUENCE [LARGE SCALE GENOMIC DNA]</scope>
</reference>
<reference key="4">
    <citation type="journal article" date="2004" name="Genome Res.">
        <title>The status, quality, and expansion of the NIH full-length cDNA project: the Mammalian Gene Collection (MGC).</title>
        <authorList>
            <consortium name="The MGC Project Team"/>
        </authorList>
    </citation>
    <scope>NUCLEOTIDE SEQUENCE [LARGE SCALE MRNA] (ISOFORM 3)</scope>
    <source>
        <tissue>Brain</tissue>
        <tissue>Lymph</tissue>
    </source>
</reference>
<reference key="5">
    <citation type="journal article" date="2004" name="Nat. Genet.">
        <title>Complete sequencing and characterization of 21,243 full-length human cDNAs.</title>
        <authorList>
            <person name="Ota T."/>
            <person name="Suzuki Y."/>
            <person name="Nishikawa T."/>
            <person name="Otsuki T."/>
            <person name="Sugiyama T."/>
            <person name="Irie R."/>
            <person name="Wakamatsu A."/>
            <person name="Hayashi K."/>
            <person name="Sato H."/>
            <person name="Nagai K."/>
            <person name="Kimura K."/>
            <person name="Makita H."/>
            <person name="Sekine M."/>
            <person name="Obayashi M."/>
            <person name="Nishi T."/>
            <person name="Shibahara T."/>
            <person name="Tanaka T."/>
            <person name="Ishii S."/>
            <person name="Yamamoto J."/>
            <person name="Saito K."/>
            <person name="Kawai Y."/>
            <person name="Isono Y."/>
            <person name="Nakamura Y."/>
            <person name="Nagahari K."/>
            <person name="Murakami K."/>
            <person name="Yasuda T."/>
            <person name="Iwayanagi T."/>
            <person name="Wagatsuma M."/>
            <person name="Shiratori A."/>
            <person name="Sudo H."/>
            <person name="Hosoiri T."/>
            <person name="Kaku Y."/>
            <person name="Kodaira H."/>
            <person name="Kondo H."/>
            <person name="Sugawara M."/>
            <person name="Takahashi M."/>
            <person name="Kanda K."/>
            <person name="Yokoi T."/>
            <person name="Furuya T."/>
            <person name="Kikkawa E."/>
            <person name="Omura Y."/>
            <person name="Abe K."/>
            <person name="Kamihara K."/>
            <person name="Katsuta N."/>
            <person name="Sato K."/>
            <person name="Tanikawa M."/>
            <person name="Yamazaki M."/>
            <person name="Ninomiya K."/>
            <person name="Ishibashi T."/>
            <person name="Yamashita H."/>
            <person name="Murakawa K."/>
            <person name="Fujimori K."/>
            <person name="Tanai H."/>
            <person name="Kimata M."/>
            <person name="Watanabe M."/>
            <person name="Hiraoka S."/>
            <person name="Chiba Y."/>
            <person name="Ishida S."/>
            <person name="Ono Y."/>
            <person name="Takiguchi S."/>
            <person name="Watanabe S."/>
            <person name="Yosida M."/>
            <person name="Hotuta T."/>
            <person name="Kusano J."/>
            <person name="Kanehori K."/>
            <person name="Takahashi-Fujii A."/>
            <person name="Hara H."/>
            <person name="Tanase T.-O."/>
            <person name="Nomura Y."/>
            <person name="Togiya S."/>
            <person name="Komai F."/>
            <person name="Hara R."/>
            <person name="Takeuchi K."/>
            <person name="Arita M."/>
            <person name="Imose N."/>
            <person name="Musashino K."/>
            <person name="Yuuki H."/>
            <person name="Oshima A."/>
            <person name="Sasaki N."/>
            <person name="Aotsuka S."/>
            <person name="Yoshikawa Y."/>
            <person name="Matsunawa H."/>
            <person name="Ichihara T."/>
            <person name="Shiohata N."/>
            <person name="Sano S."/>
            <person name="Moriya S."/>
            <person name="Momiyama H."/>
            <person name="Satoh N."/>
            <person name="Takami S."/>
            <person name="Terashima Y."/>
            <person name="Suzuki O."/>
            <person name="Nakagawa S."/>
            <person name="Senoh A."/>
            <person name="Mizoguchi H."/>
            <person name="Goto Y."/>
            <person name="Shimizu F."/>
            <person name="Wakebe H."/>
            <person name="Hishigaki H."/>
            <person name="Watanabe T."/>
            <person name="Sugiyama A."/>
            <person name="Takemoto M."/>
            <person name="Kawakami B."/>
            <person name="Yamazaki M."/>
            <person name="Watanabe K."/>
            <person name="Kumagai A."/>
            <person name="Itakura S."/>
            <person name="Fukuzumi Y."/>
            <person name="Fujimori Y."/>
            <person name="Komiyama M."/>
            <person name="Tashiro H."/>
            <person name="Tanigami A."/>
            <person name="Fujiwara T."/>
            <person name="Ono T."/>
            <person name="Yamada K."/>
            <person name="Fujii Y."/>
            <person name="Ozaki K."/>
            <person name="Hirao M."/>
            <person name="Ohmori Y."/>
            <person name="Kawabata A."/>
            <person name="Hikiji T."/>
            <person name="Kobatake N."/>
            <person name="Inagaki H."/>
            <person name="Ikema Y."/>
            <person name="Okamoto S."/>
            <person name="Okitani R."/>
            <person name="Kawakami T."/>
            <person name="Noguchi S."/>
            <person name="Itoh T."/>
            <person name="Shigeta K."/>
            <person name="Senba T."/>
            <person name="Matsumura K."/>
            <person name="Nakajima Y."/>
            <person name="Mizuno T."/>
            <person name="Morinaga M."/>
            <person name="Sasaki M."/>
            <person name="Togashi T."/>
            <person name="Oyama M."/>
            <person name="Hata H."/>
            <person name="Watanabe M."/>
            <person name="Komatsu T."/>
            <person name="Mizushima-Sugano J."/>
            <person name="Satoh T."/>
            <person name="Shirai Y."/>
            <person name="Takahashi Y."/>
            <person name="Nakagawa K."/>
            <person name="Okumura K."/>
            <person name="Nagase T."/>
            <person name="Nomura N."/>
            <person name="Kikuchi H."/>
            <person name="Masuho Y."/>
            <person name="Yamashita R."/>
            <person name="Nakai K."/>
            <person name="Yada T."/>
            <person name="Nakamura Y."/>
            <person name="Ohara O."/>
            <person name="Isogai T."/>
            <person name="Sugano S."/>
        </authorList>
    </citation>
    <scope>NUCLEOTIDE SEQUENCE [LARGE SCALE MRNA] OF 156-839</scope>
    <scope>VARIANT GLY-592</scope>
    <source>
        <tissue>Embryo</tissue>
    </source>
</reference>
<reference key="6">
    <citation type="journal article" date="2005" name="J. Biol. Chem.">
        <title>Endothelial nitric-oxide synthase antisense (NOS3AS) gene encodes an autophagy-related protein (APG9-like2) highly expressed in trophoblast.</title>
        <authorList>
            <person name="Yamada T."/>
            <person name="Carson A.R."/>
            <person name="Caniggia I."/>
            <person name="Umebayashi K."/>
            <person name="Yoshimori T."/>
            <person name="Nakabayashi K."/>
            <person name="Scherer S.W."/>
        </authorList>
    </citation>
    <scope>IDENTIFICATION</scope>
</reference>
<reference key="7">
    <citation type="journal article" date="2006" name="Cell">
        <title>Global, in vivo, and site-specific phosphorylation dynamics in signaling networks.</title>
        <authorList>
            <person name="Olsen J.V."/>
            <person name="Blagoev B."/>
            <person name="Gnad F."/>
            <person name="Macek B."/>
            <person name="Kumar C."/>
            <person name="Mortensen P."/>
            <person name="Mann M."/>
        </authorList>
    </citation>
    <scope>PHOSPHORYLATION [LARGE SCALE ANALYSIS] AT SER-828</scope>
    <scope>IDENTIFICATION BY MASS SPECTROMETRY [LARGE SCALE ANALYSIS]</scope>
    <source>
        <tissue>Cervix carcinoma</tissue>
    </source>
</reference>
<reference key="8">
    <citation type="journal article" date="2006" name="J. Cell Sci.">
        <title>Starvation and ULK1-dependent cycling of mammalian Atg9 between the TGN and endosomes.</title>
        <authorList>
            <person name="Young A.R."/>
            <person name="Chan E.Y."/>
            <person name="Hu X.W."/>
            <person name="Kochl R."/>
            <person name="Crawshaw S.G."/>
            <person name="High S."/>
            <person name="Hailey D.W."/>
            <person name="Lippincott-Schwartz J."/>
            <person name="Tooze S.A."/>
        </authorList>
    </citation>
    <scope>FUNCTION</scope>
    <scope>SUBCELLULAR LOCATION</scope>
    <scope>TOPOLOGY</scope>
    <scope>GLYCOSYLATION AT ASN-99</scope>
</reference>
<reference key="9">
    <citation type="journal article" date="2008" name="Proc. Natl. Acad. Sci. U.S.A.">
        <title>A quantitative atlas of mitotic phosphorylation.</title>
        <authorList>
            <person name="Dephoure N."/>
            <person name="Zhou C."/>
            <person name="Villen J."/>
            <person name="Beausoleil S.A."/>
            <person name="Bakalarski C.E."/>
            <person name="Elledge S.J."/>
            <person name="Gygi S.P."/>
        </authorList>
    </citation>
    <scope>PHOSPHORYLATION [LARGE SCALE ANALYSIS] AT SER-18 AND SER-656</scope>
    <scope>IDENTIFICATION BY MASS SPECTROMETRY [LARGE SCALE ANALYSIS]</scope>
    <source>
        <tissue>Cervix carcinoma</tissue>
    </source>
</reference>
<reference key="10">
    <citation type="journal article" date="2009" name="Mol. Cell. Biol.">
        <title>Kinase-inactivated ULK proteins inhibit autophagy via their conserved C-terminal domains using an Atg13-independent mechanism.</title>
        <authorList>
            <person name="Chan E.Y.W."/>
            <person name="Longatti A."/>
            <person name="McKnight N.C."/>
            <person name="Tooze S.A."/>
        </authorList>
    </citation>
    <scope>SUBCELLULAR LOCATION</scope>
</reference>
<reference key="11">
    <citation type="journal article" date="2010" name="EMBO J.">
        <title>Coordinated regulation of autophagy by p38alpha MAPK through mAtg9 and p38IP.</title>
        <authorList>
            <person name="Webber J.L."/>
            <person name="Tooze S.A."/>
        </authorList>
    </citation>
    <scope>INTERACTION WITH SUPT20H</scope>
</reference>
<reference key="12">
    <citation type="journal article" date="2010" name="J. Biol. Chem.">
        <title>Biochemical isolation and characterization of the tubulovesicular LC3-positive autophagosomal compartment.</title>
        <authorList>
            <person name="Gao W."/>
            <person name="Kang J.H."/>
            <person name="Liao Y."/>
            <person name="Ding W.X."/>
            <person name="Gambotto A.A."/>
            <person name="Watkins S.C."/>
            <person name="Liu Y.J."/>
            <person name="Stolz D.B."/>
            <person name="Yin X.M."/>
        </authorList>
    </citation>
    <scope>SUBCELLULAR LOCATION</scope>
</reference>
<reference key="13">
    <citation type="journal article" date="2010" name="J. Histochem. Cytochem.">
        <title>Atg9A protein, an autophagy-related membrane protein, is localized in the neurons of mouse brains.</title>
        <authorList>
            <person name="Tamura H."/>
            <person name="Shibata M."/>
            <person name="Koike M."/>
            <person name="Sasaki M."/>
            <person name="Uchiyama Y."/>
        </authorList>
    </citation>
    <scope>SUBCELLULAR LOCATION</scope>
</reference>
<reference key="14">
    <citation type="journal article" date="2010" name="Sci. Signal.">
        <title>Quantitative phosphoproteomics reveals widespread full phosphorylation site occupancy during mitosis.</title>
        <authorList>
            <person name="Olsen J.V."/>
            <person name="Vermeulen M."/>
            <person name="Santamaria A."/>
            <person name="Kumar C."/>
            <person name="Miller M.L."/>
            <person name="Jensen L.J."/>
            <person name="Gnad F."/>
            <person name="Cox J."/>
            <person name="Jensen T.S."/>
            <person name="Nigg E.A."/>
            <person name="Brunak S."/>
            <person name="Mann M."/>
        </authorList>
    </citation>
    <scope>PHOSPHORYLATION [LARGE SCALE ANALYSIS] AT SER-828</scope>
    <scope>IDENTIFICATION BY MASS SPECTROMETRY [LARGE SCALE ANALYSIS]</scope>
    <source>
        <tissue>Cervix carcinoma</tissue>
    </source>
</reference>
<reference key="15">
    <citation type="journal article" date="2011" name="Autophagy">
        <title>Bif-1 regulates Atg9 trafficking by mediating the fission of Golgi membranes during autophagy.</title>
        <authorList>
            <person name="Takahashi Y."/>
            <person name="Meyerkord C.L."/>
            <person name="Hori T."/>
            <person name="Runkle K."/>
            <person name="Fox T.E."/>
            <person name="Kester M."/>
            <person name="Loughran T.P."/>
            <person name="Wang H.G."/>
        </authorList>
    </citation>
    <scope>SUBCELLULAR LOCATION</scope>
    <scope>TRAFFICKING</scope>
</reference>
<reference key="16">
    <citation type="journal article" date="2011" name="Sci. Signal.">
        <title>System-wide temporal characterization of the proteome and phosphoproteome of human embryonic stem cell differentiation.</title>
        <authorList>
            <person name="Rigbolt K.T."/>
            <person name="Prokhorova T.A."/>
            <person name="Akimov V."/>
            <person name="Henningsen J."/>
            <person name="Johansen P.T."/>
            <person name="Kratchmarova I."/>
            <person name="Kassem M."/>
            <person name="Mann M."/>
            <person name="Olsen J.V."/>
            <person name="Blagoev B."/>
        </authorList>
    </citation>
    <scope>PHOSPHORYLATION [LARGE SCALE ANALYSIS] AT SER-735; SER-738 AND SER-741</scope>
    <scope>IDENTIFICATION BY MASS SPECTROMETRY [LARGE SCALE ANALYSIS]</scope>
</reference>
<reference key="17">
    <citation type="journal article" date="2012" name="Mol. Biol. Cell">
        <title>Dynamic and transient interactions of Atg9 with autophagosomes, but not membrane integration, are required for autophagy.</title>
        <authorList>
            <person name="Orsi A."/>
            <person name="Razi M."/>
            <person name="Dooley H.C."/>
            <person name="Robinson D."/>
            <person name="Weston A.E."/>
            <person name="Collinson L.M."/>
            <person name="Tooze S.A."/>
        </authorList>
    </citation>
    <scope>FUNCTION</scope>
    <scope>SUBCELLULAR LOCATION</scope>
</reference>
<reference key="18">
    <citation type="journal article" date="2012" name="Mol. Cell. Proteomics">
        <title>Comparative large-scale characterisation of plant vs. mammal proteins reveals similar and idiosyncratic N-alpha acetylation features.</title>
        <authorList>
            <person name="Bienvenut W.V."/>
            <person name="Sumpton D."/>
            <person name="Martinez A."/>
            <person name="Lilla S."/>
            <person name="Espagne C."/>
            <person name="Meinnel T."/>
            <person name="Giglione C."/>
        </authorList>
    </citation>
    <scope>ACETYLATION [LARGE SCALE ANALYSIS] AT ALA-2</scope>
    <scope>CLEAVAGE OF INITIATOR METHIONINE [LARGE SCALE ANALYSIS]</scope>
    <scope>IDENTIFICATION BY MASS SPECTROMETRY [LARGE SCALE ANALYSIS]</scope>
</reference>
<reference key="19">
    <citation type="journal article" date="2012" name="Proc. Natl. Acad. Sci. U.S.A.">
        <title>N-terminal acetylome analyses and functional insights of the N-terminal acetyltransferase NatB.</title>
        <authorList>
            <person name="Van Damme P."/>
            <person name="Lasa M."/>
            <person name="Polevoda B."/>
            <person name="Gazquez C."/>
            <person name="Elosegui-Artola A."/>
            <person name="Kim D.S."/>
            <person name="De Juan-Pardo E."/>
            <person name="Demeyer K."/>
            <person name="Hole K."/>
            <person name="Larrea E."/>
            <person name="Timmerman E."/>
            <person name="Prieto J."/>
            <person name="Arnesen T."/>
            <person name="Sherman F."/>
            <person name="Gevaert K."/>
            <person name="Aldabe R."/>
        </authorList>
    </citation>
    <scope>ACETYLATION [LARGE SCALE ANALYSIS] AT ALA-2</scope>
    <scope>CLEAVAGE OF INITIATOR METHIONINE [LARGE SCALE ANALYSIS]</scope>
    <scope>IDENTIFICATION BY MASS SPECTROMETRY [LARGE SCALE ANALYSIS]</scope>
</reference>
<reference key="20">
    <citation type="journal article" date="2013" name="J. Proteome Res.">
        <title>Toward a comprehensive characterization of a human cancer cell phosphoproteome.</title>
        <authorList>
            <person name="Zhou H."/>
            <person name="Di Palma S."/>
            <person name="Preisinger C."/>
            <person name="Peng M."/>
            <person name="Polat A.N."/>
            <person name="Heck A.J."/>
            <person name="Mohammed S."/>
        </authorList>
    </citation>
    <scope>PHOSPHORYLATION [LARGE SCALE ANALYSIS] AT SER-14; SER-18; SER-656; SER-735 AND SER-828</scope>
    <scope>IDENTIFICATION BY MASS SPECTROMETRY [LARGE SCALE ANALYSIS]</scope>
    <source>
        <tissue>Cervix carcinoma</tissue>
        <tissue>Erythroleukemia</tissue>
    </source>
</reference>
<reference key="21">
    <citation type="journal article" date="2014" name="J. Proteomics">
        <title>An enzyme assisted RP-RPLC approach for in-depth analysis of human liver phosphoproteome.</title>
        <authorList>
            <person name="Bian Y."/>
            <person name="Song C."/>
            <person name="Cheng K."/>
            <person name="Dong M."/>
            <person name="Wang F."/>
            <person name="Huang J."/>
            <person name="Sun D."/>
            <person name="Wang L."/>
            <person name="Ye M."/>
            <person name="Zou H."/>
        </authorList>
    </citation>
    <scope>PHOSPHORYLATION [LARGE SCALE ANALYSIS] AT SER-735 AND SER-828</scope>
    <scope>IDENTIFICATION BY MASS SPECTROMETRY [LARGE SCALE ANALYSIS]</scope>
    <source>
        <tissue>Liver</tissue>
    </source>
</reference>
<reference key="22">
    <citation type="journal article" date="2016" name="Biochim. Biophys. Acta">
        <title>Molecular determinants that mediate the sorting of human ATG9A from the endoplasmic reticulum.</title>
        <authorList>
            <person name="Staudt C."/>
            <person name="Gilis F."/>
            <person name="Boonen M."/>
            <person name="Jadot M."/>
        </authorList>
    </citation>
    <scope>SUBCELLULAR LOCATION</scope>
    <scope>GLYCOSYLATION AT ASN-99</scope>
    <scope>MUTAGENESIS OF ASN-99 AND 711-LEU--MET-713</scope>
</reference>
<reference key="23">
    <citation type="journal article" date="2016" name="Biochem. Biophys. Res. Commun.">
        <title>A conserved glycine residue in the C-terminal region of human ATG9A is required for its transport from the endoplasmic reticulum to the Golgi apparatus.</title>
        <authorList>
            <person name="Staudt C."/>
            <person name="Gilis F."/>
            <person name="Tevel V."/>
            <person name="Jadot M."/>
            <person name="Boonen M."/>
        </authorList>
    </citation>
    <scope>SUBCELLULAR LOCATION</scope>
    <scope>MUTAGENESIS OF 516-GLY--CYS-519</scope>
</reference>
<reference key="24">
    <citation type="journal article" date="2016" name="Nat. Commun.">
        <title>Autophagy initiation by ULK complex assembly on ER tubulovesicular regions marked by ATG9 vesicles.</title>
        <authorList>
            <person name="Karanasios E."/>
            <person name="Walker S.A."/>
            <person name="Okkenhaug H."/>
            <person name="Manifava M."/>
            <person name="Hummel E."/>
            <person name="Zimmermann H."/>
            <person name="Ahmed Q."/>
            <person name="Domart M.C."/>
            <person name="Collinson L."/>
            <person name="Ktistakis N.T."/>
        </authorList>
    </citation>
    <scope>FUNCTION</scope>
</reference>
<reference key="25">
    <citation type="journal article" date="2017" name="Proc. Natl. Acad. Sci. U.S.A.">
        <title>AP-4 mediates export of ATG9A from the trans-Golgi network to promote autophagosome formation.</title>
        <authorList>
            <person name="Mattera R."/>
            <person name="Park S.Y."/>
            <person name="De Pace R."/>
            <person name="Guardia C.M."/>
            <person name="Bonifacino J.S."/>
        </authorList>
    </citation>
    <scope>SUBCELLULAR LOCATION</scope>
    <scope>INTERACTION WITH AP4M1</scope>
    <scope>MOTIF</scope>
    <scope>DOMAIN</scope>
    <scope>MUTAGENESIS OF TYR-8; GLN-9; ARG-10; LEU-11; GLU-12 AND TYR-15</scope>
</reference>
<reference key="26">
    <citation type="journal article" date="2018" name="EMBO Rep.">
        <title>SNX18 regulates ATG9A trafficking from recycling endosomes by recruiting Dynamin-2.</title>
        <authorList>
            <person name="Soereng K."/>
            <person name="Munson M.J."/>
            <person name="Lamb C.A."/>
            <person name="Bjoerndal G.T."/>
            <person name="Pankiv S."/>
            <person name="Carlsson S.R."/>
            <person name="Tooze S.A."/>
            <person name="Simonsen A."/>
        </authorList>
    </citation>
    <scope>FUNCTION</scope>
    <scope>SUBCELLULAR LOCATION</scope>
</reference>
<reference key="27">
    <citation type="journal article" date="2018" name="Nat. Commun.">
        <title>AP-4 vesicles contribute to spatial control of autophagy via RUSC-dependent peripheral delivery of ATG9A.</title>
        <authorList>
            <person name="Davies A.K."/>
            <person name="Itzhak D.N."/>
            <person name="Edgar J.R."/>
            <person name="Archuleta T.L."/>
            <person name="Hirst J."/>
            <person name="Jackson L.P."/>
            <person name="Robinson M.S."/>
            <person name="Borner G.H.H."/>
        </authorList>
    </citation>
    <scope>SUBCELLULAR LOCATION</scope>
</reference>
<reference key="28">
    <citation type="journal article" date="2019" name="J. Cell Biol.">
        <title>ATG9A shapes the forming autophagosome through Arfaptin 2 and phosphatidylinositol 4-kinase IIIbeta.</title>
        <authorList>
            <person name="Judith D."/>
            <person name="Jefferies H.B.J."/>
            <person name="Boeing S."/>
            <person name="Frith D."/>
            <person name="Snijders A.P."/>
            <person name="Tooze S.A."/>
        </authorList>
    </citation>
    <scope>FUNCTION</scope>
    <scope>INTERACTION WITH ARFIP1; ARFIP1; PI4K2A AND PI4KB</scope>
</reference>
<reference key="29">
    <citation type="journal article" date="2020" name="J. Cell Sci.">
        <title>A heterodimeric SNX4--SNX7 SNX-BAR autophagy complex coordinates ATG9A trafficking for efficient autophagosome assembly.</title>
        <authorList>
            <person name="Anton Z."/>
            <person name="Betin V.M.S."/>
            <person name="Simonetti B."/>
            <person name="Traer C.J."/>
            <person name="Attar N."/>
            <person name="Cullen P.J."/>
            <person name="Lane J.D."/>
        </authorList>
    </citation>
    <scope>SUBCELLULAR LOCATION</scope>
    <scope>FUNCTION</scope>
</reference>
<reference key="30">
    <citation type="journal article" date="2022" name="Autophagy">
        <title>C5orf51 is a component of the MON1-CCZ1 complex and controls RAB7A localization and stability during mitophagy.</title>
        <authorList>
            <person name="Yan B.R."/>
            <person name="Li T."/>
            <person name="Coyaud E."/>
            <person name="Laurent E.M.N."/>
            <person name="St-Germain J."/>
            <person name="Zhou Y."/>
            <person name="Kim P.K."/>
            <person name="Raught B."/>
            <person name="Brumell J.H."/>
        </authorList>
    </citation>
    <scope>SUBCELLULAR LOCATION</scope>
</reference>
<reference key="31">
    <citation type="journal article" date="2021" name="J. Cell Sci.">
        <title>The phosphatidylinositol 3-phosphate-binding protein SNX4 controls ATG9A recycling and autophagy.</title>
        <authorList>
            <person name="Ravussin A."/>
            <person name="Brech A."/>
            <person name="Tooze S.A."/>
            <person name="Stenmark H."/>
        </authorList>
    </citation>
    <scope>SUBCELLULAR LOCATION</scope>
    <scope>FUNCTION</scope>
</reference>
<reference key="32">
    <citation type="journal article" date="2020" name="Mol. Biol. Cell">
        <title>The FTS-Hook-FHIP (FHF) complex interacts with AP-4 to mediate perinuclear distribution of AP-4 and its cargo ATG9A.</title>
        <authorList>
            <person name="Mattera R."/>
            <person name="Williamson C.D."/>
            <person name="Ren X."/>
            <person name="Bonifacino J.S."/>
        </authorList>
    </citation>
    <scope>SUBCELLULAR LOCATION</scope>
</reference>
<reference key="33">
    <citation type="journal article" date="2021" name="Mol. Cell">
        <title>ATG4 family proteins drive phagophore growth independently of the LC3/GABARAP lipidation system.</title>
        <authorList>
            <person name="Nguyen T.N."/>
            <person name="Padman B.S."/>
            <person name="Zellner S."/>
            <person name="Khuu G."/>
            <person name="Uoselis L."/>
            <person name="Lam W.K."/>
            <person name="Skulsuppaisarn M."/>
            <person name="Lindblom R.S.J."/>
            <person name="Watts E.M."/>
            <person name="Behrends C."/>
            <person name="Lazarou M."/>
        </authorList>
    </citation>
    <scope>INTERACTION WITH ATG4A</scope>
</reference>
<reference key="34">
    <citation type="journal article" date="2021" name="Proc. Natl. Acad. Sci. U.S.A.">
        <title>A model for a partnership of lipid transfer proteins and scramblases in membrane expansion and organelle biogenesis.</title>
        <authorList>
            <person name="Ghanbarpour A."/>
            <person name="Valverde D.P."/>
            <person name="Melia T.J."/>
            <person name="Reinisch K.M."/>
        </authorList>
    </citation>
    <scope>FUNCTION</scope>
    <scope>CATALYTIC ACTIVITY</scope>
</reference>
<reference evidence="37 38" key="35">
    <citation type="journal article" date="2020" name="Cell Rep.">
        <title>Structure of human ATG9A, the only transmembrane protein of the core autophagy machinery.</title>
        <authorList>
            <person name="Guardia C.M."/>
            <person name="Tan X.F."/>
            <person name="Lian T."/>
            <person name="Rana M.S."/>
            <person name="Zhou W."/>
            <person name="Christenson E.T."/>
            <person name="Lowry A.J."/>
            <person name="Faraldo-Gomez J.D."/>
            <person name="Bonifacino J.S."/>
            <person name="Jiang J."/>
            <person name="Banerjee A."/>
        </authorList>
    </citation>
    <scope>STRUCTURE BY ELECTRON MICROSCOPY (2.80 ANGSTROMS) OF 1-688</scope>
    <scope>FUNCTION</scope>
    <scope>SUBUNIT</scope>
    <scope>TOPOLOGY</scope>
    <scope>DOMAIN</scope>
    <scope>INTERACTION WITH ATG2A</scope>
    <scope>MUTAGENESIS OF ASN-265 AND ARG-422</scope>
</reference>
<reference evidence="39 40 41" key="36">
    <citation type="journal article" date="2020" name="Nat. Struct. Mol. Biol.">
        <title>Structure, lipid scrambling activity and role in autophagosome formation of ATG9A.</title>
        <authorList>
            <person name="Maeda S."/>
            <person name="Yamamoto H."/>
            <person name="Kinch L.N."/>
            <person name="Garza C.M."/>
            <person name="Takahashi S."/>
            <person name="Otomo C."/>
            <person name="Grishin N.V."/>
            <person name="Forli S."/>
            <person name="Mizushima N."/>
            <person name="Otomo T."/>
        </authorList>
    </citation>
    <scope>STRUCTURE BY ELECTRON MICROSCOPY (3.40 ANGSTROMS) OF 1-578</scope>
    <scope>FUNCTION</scope>
    <scope>CATALYTIC ACTIVITY</scope>
    <scope>SUBUNIT</scope>
    <scope>TOPOLOGY</scope>
    <scope>DOMAIN</scope>
    <scope>INTERACTION WITH ATG2A</scope>
    <scope>MUTAGENESIS OF 321-LYS--GLU-323; THR-412 AND THR-419</scope>
</reference>
<gene>
    <name evidence="32 36" type="primary">ATG9A</name>
    <name evidence="29" type="synonym">APG9L1</name>
</gene>
<feature type="initiator methionine" description="Removed" evidence="46 47">
    <location>
        <position position="1"/>
    </location>
</feature>
<feature type="chain" id="PRO_0000119820" description="Autophagy-related protein 9A">
    <location>
        <begin position="2"/>
        <end position="839"/>
    </location>
</feature>
<feature type="topological domain" description="Cytoplasmic" evidence="34">
    <location>
        <begin position="2"/>
        <end position="61"/>
    </location>
</feature>
<feature type="transmembrane region" description="Helical" evidence="22 23 37 38 39 40 41">
    <location>
        <begin position="62"/>
        <end position="84"/>
    </location>
</feature>
<feature type="topological domain" description="Lumenal" evidence="34">
    <location>
        <begin position="85"/>
        <end position="128"/>
    </location>
</feature>
<feature type="transmembrane region" description="Helical" evidence="22 23 37 38 39 40 41">
    <location>
        <begin position="129"/>
        <end position="154"/>
    </location>
</feature>
<feature type="topological domain" description="Cytoplasmic" evidence="34">
    <location>
        <begin position="155"/>
        <end position="290"/>
    </location>
</feature>
<feature type="intramembrane region" evidence="22 23 37 38 40 41">
    <location>
        <begin position="291"/>
        <end position="301"/>
    </location>
</feature>
<feature type="topological domain" description="Cytoplasmic" evidence="34">
    <location>
        <begin position="302"/>
        <end position="319"/>
    </location>
</feature>
<feature type="intramembrane region" evidence="22 23 37 38 39 40 41">
    <location>
        <begin position="320"/>
        <end position="328"/>
    </location>
</feature>
<feature type="topological domain" description="Cytoplasmic" evidence="34">
    <location>
        <begin position="329"/>
        <end position="371"/>
    </location>
</feature>
<feature type="transmembrane region" description="Helical" evidence="22 23 37 38 39 40 41">
    <location>
        <begin position="372"/>
        <end position="397"/>
    </location>
</feature>
<feature type="topological domain" description="Lumenal" evidence="34">
    <location>
        <begin position="398"/>
        <end position="406"/>
    </location>
</feature>
<feature type="transmembrane region" description="Helical" evidence="22 23 37 38 39 40 41">
    <location>
        <begin position="407"/>
        <end position="424"/>
    </location>
</feature>
<feature type="topological domain" description="Cytoplasmic" evidence="34">
    <location>
        <begin position="425"/>
        <end position="470"/>
    </location>
</feature>
<feature type="intramembrane region" evidence="22 37">
    <location>
        <begin position="471"/>
        <end position="480"/>
    </location>
</feature>
<feature type="topological domain" description="Cytoplasmic" evidence="34">
    <location>
        <begin position="481"/>
        <end position="483"/>
    </location>
</feature>
<feature type="intramembrane region" evidence="22 23 37 40">
    <location>
        <begin position="484"/>
        <end position="492"/>
    </location>
</feature>
<feature type="topological domain" description="Cytoplasmic" evidence="34">
    <location>
        <begin position="493"/>
        <end position="839"/>
    </location>
</feature>
<feature type="region of interest" description="Disordered" evidence="3">
    <location>
        <begin position="1"/>
        <end position="20"/>
    </location>
</feature>
<feature type="region of interest" description="Disordered" evidence="3">
    <location>
        <begin position="656"/>
        <end position="686"/>
    </location>
</feature>
<feature type="region of interest" description="Disordered" evidence="3">
    <location>
        <begin position="717"/>
        <end position="839"/>
    </location>
</feature>
<feature type="short sequence motif" description="Tyrosine-based sorting signal" evidence="16">
    <location>
        <begin position="8"/>
        <end position="11"/>
    </location>
</feature>
<feature type="compositionally biased region" description="Basic and acidic residues" evidence="3">
    <location>
        <begin position="724"/>
        <end position="736"/>
    </location>
</feature>
<feature type="compositionally biased region" description="Acidic residues" evidence="3">
    <location>
        <begin position="737"/>
        <end position="747"/>
    </location>
</feature>
<feature type="compositionally biased region" description="Acidic residues" evidence="3">
    <location>
        <begin position="823"/>
        <end position="832"/>
    </location>
</feature>
<feature type="modified residue" description="N-acetylalanine" evidence="46 47">
    <location>
        <position position="2"/>
    </location>
</feature>
<feature type="modified residue" description="Phosphoserine" evidence="48">
    <location>
        <position position="14"/>
    </location>
</feature>
<feature type="modified residue" description="Phosphoserine" evidence="1">
    <location>
        <position position="16"/>
    </location>
</feature>
<feature type="modified residue" description="Phosphoserine" evidence="43 48">
    <location>
        <position position="18"/>
    </location>
</feature>
<feature type="modified residue" description="Phosphoserine" evidence="43 48">
    <location>
        <position position="656"/>
    </location>
</feature>
<feature type="modified residue" description="Phosphoserine" evidence="45 48 49">
    <location>
        <position position="735"/>
    </location>
</feature>
<feature type="modified residue" description="Phosphoserine" evidence="45">
    <location>
        <position position="738"/>
    </location>
</feature>
<feature type="modified residue" description="Phosphoserine" evidence="45">
    <location>
        <position position="741"/>
    </location>
</feature>
<feature type="modified residue" description="Phosphoserine" evidence="42 44 48 49">
    <location>
        <position position="828"/>
    </location>
</feature>
<feature type="glycosylation site" description="N-linked (GlcNAc...) asparagine" evidence="5 13">
    <location>
        <position position="99"/>
    </location>
</feature>
<feature type="splice variant" id="VSP_013396" description="In isoform 2." evidence="30">
    <location>
        <begin position="1"/>
        <end position="61"/>
    </location>
</feature>
<feature type="splice variant" id="VSP_013397" description="In isoform 3." evidence="28">
    <original>NAHRSQTRDEFAQLFQYKAVFILEELLSPIVTPLILIFCLRPRALEIIDFFRNFTVEVVGVGDTCSFAQMDVRQ</original>
    <variation>VHFGRVAEPHCHTPHPHLLPAPTGPGDYRLLPKLHRGGRWCGRYLLLCSDGCSPAWSSPVAICWADRGLSVPAS</variation>
    <location>
        <begin position="455"/>
        <end position="528"/>
    </location>
</feature>
<feature type="splice variant" id="VSP_013398" description="In isoform 3." evidence="28">
    <location>
        <begin position="529"/>
        <end position="839"/>
    </location>
</feature>
<feature type="sequence variant" id="VAR_021835" description="In dbSNP:rs2276635." evidence="4 6">
    <original>S</original>
    <variation>G</variation>
    <location>
        <position position="592"/>
    </location>
</feature>
<feature type="sequence variant" id="VAR_055534" description="In dbSNP:rs2276634.">
    <original>Q</original>
    <variation>H</variation>
    <location>
        <position position="659"/>
    </location>
</feature>
<feature type="mutagenesis site" description="Abolished interaction with the AP-4 complex." evidence="16">
    <original>Y</original>
    <variation>A</variation>
    <location>
        <position position="8"/>
    </location>
</feature>
<feature type="mutagenesis site" description="Abolished interaction with the AP-4 complex." evidence="16">
    <original>Q</original>
    <variation>A</variation>
    <location>
        <position position="9"/>
    </location>
</feature>
<feature type="mutagenesis site" description="Does not affect interaction with the AP-4 complex." evidence="16">
    <original>R</original>
    <variation>A</variation>
    <location>
        <position position="10"/>
    </location>
</feature>
<feature type="mutagenesis site" description="Abolished interaction with the AP-4 complex." evidence="16">
    <original>L</original>
    <variation>A</variation>
    <location>
        <position position="11"/>
    </location>
</feature>
<feature type="mutagenesis site" description="Abolished interaction with the AP-4 complex." evidence="16">
    <original>E</original>
    <variation>A</variation>
    <location>
        <position position="12"/>
    </location>
</feature>
<feature type="mutagenesis site" description="Does not affect interaction with the AP-4 complex." evidence="16">
    <original>Y</original>
    <variation>A</variation>
    <location>
        <position position="15"/>
    </location>
</feature>
<feature type="mutagenesis site" description="Abolished N-glycosylation." evidence="13">
    <original>N</original>
    <variation>D</variation>
    <location>
        <position position="99"/>
    </location>
</feature>
<feature type="mutagenesis site" description="Impaired autophagy." evidence="22">
    <original>N</original>
    <variation>W</variation>
    <location>
        <position position="265"/>
    </location>
</feature>
<feature type="mutagenesis site" description="Reduced lipid scramblase activity and autophagy. Strongly reduced autophagy; when associated with W-412. Strongly reduced lipid scramblase activity and autophagy; when associated with W-419." evidence="23">
    <original>KRE</original>
    <variation>LLL</variation>
    <location>
        <begin position="321"/>
        <end position="323"/>
    </location>
</feature>
<feature type="mutagenesis site" description="Does not affect lipid scramblase activity. Strongly reduced autophagy; when associated with L-321--L-323." evidence="23">
    <original>T</original>
    <variation>W</variation>
    <location>
        <position position="412"/>
    </location>
</feature>
<feature type="mutagenesis site" description="Strongly reduced lipid scramblase activity and autophagy; when associated with L-321--L-323." evidence="23">
    <original>T</original>
    <variation>W</variation>
    <location>
        <position position="419"/>
    </location>
</feature>
<feature type="mutagenesis site" description="Impaired autophagy." evidence="22">
    <original>R</original>
    <variation>W</variation>
    <location>
        <position position="422"/>
    </location>
</feature>
<feature type="mutagenesis site" description="Impaired transport from the endoplasmic reticulum to the Golgi apparatus without affecting homooligomerization." evidence="15">
    <original>GDTC</original>
    <variation>ADTA</variation>
    <location>
        <begin position="516"/>
        <end position="519"/>
    </location>
</feature>
<feature type="mutagenesis site" description="Impaired transport through the Golgi apparatus." evidence="13">
    <original>LYM</original>
    <variation>AAA</variation>
    <location>
        <begin position="711"/>
        <end position="713"/>
    </location>
</feature>
<feature type="sequence conflict" description="In Ref. 1; CAD97944." evidence="34" ref="1">
    <original>H</original>
    <variation>R</variation>
    <location>
        <position position="39"/>
    </location>
</feature>
<feature type="sequence conflict" description="In Ref. 1; CAD97944." evidence="34" ref="1">
    <original>L</original>
    <variation>P</variation>
    <location>
        <position position="300"/>
    </location>
</feature>
<feature type="sequence conflict" description="In Ref. 4; AAH65534." evidence="34" ref="4">
    <original>A</original>
    <variation>T</variation>
    <location>
        <position position="381"/>
    </location>
</feature>
<feature type="sequence conflict" description="In Ref. 1; CAD98061." evidence="34" ref="1">
    <original>C</original>
    <variation>R</variation>
    <location>
        <position position="519"/>
    </location>
</feature>
<feature type="sequence conflict" description="In Ref. 1; CAD98061." evidence="34" ref="1">
    <original>W</original>
    <variation>R</variation>
    <location>
        <position position="567"/>
    </location>
</feature>
<feature type="sequence conflict" description="In Ref. 5; BAB15246." evidence="34" ref="5">
    <original>H</original>
    <variation>N</variation>
    <location>
        <position position="669"/>
    </location>
</feature>
<feature type="sequence conflict" description="In Ref. 1; CAD97944." evidence="34" ref="1">
    <original>A</original>
    <variation>V</variation>
    <location>
        <position position="765"/>
    </location>
</feature>
<feature type="helix" evidence="50">
    <location>
        <begin position="43"/>
        <end position="55"/>
    </location>
</feature>
<feature type="helix" evidence="50">
    <location>
        <begin position="59"/>
        <end position="85"/>
    </location>
</feature>
<feature type="helix" evidence="50">
    <location>
        <begin position="89"/>
        <end position="93"/>
    </location>
</feature>
<feature type="helix" evidence="50">
    <location>
        <begin position="112"/>
        <end position="114"/>
    </location>
</feature>
<feature type="helix" evidence="50">
    <location>
        <begin position="119"/>
        <end position="127"/>
    </location>
</feature>
<feature type="helix" evidence="50">
    <location>
        <begin position="130"/>
        <end position="167"/>
    </location>
</feature>
<feature type="strand" evidence="50">
    <location>
        <begin position="172"/>
        <end position="175"/>
    </location>
</feature>
<feature type="helix" evidence="50">
    <location>
        <begin position="180"/>
        <end position="193"/>
    </location>
</feature>
<feature type="strand" evidence="52">
    <location>
        <begin position="199"/>
        <end position="201"/>
    </location>
</feature>
<feature type="helix" evidence="50">
    <location>
        <begin position="207"/>
        <end position="224"/>
    </location>
</feature>
<feature type="strand" evidence="50">
    <location>
        <begin position="231"/>
        <end position="233"/>
    </location>
</feature>
<feature type="strand" evidence="50">
    <location>
        <begin position="237"/>
        <end position="241"/>
    </location>
</feature>
<feature type="helix" evidence="50">
    <location>
        <begin position="245"/>
        <end position="255"/>
    </location>
</feature>
<feature type="strand" evidence="50">
    <location>
        <begin position="257"/>
        <end position="260"/>
    </location>
</feature>
<feature type="strand" evidence="50">
    <location>
        <begin position="262"/>
        <end position="269"/>
    </location>
</feature>
<feature type="helix" evidence="50">
    <location>
        <begin position="271"/>
        <end position="274"/>
    </location>
</feature>
<feature type="helix" evidence="53">
    <location>
        <begin position="276"/>
        <end position="278"/>
    </location>
</feature>
<feature type="helix" evidence="50">
    <location>
        <begin position="279"/>
        <end position="322"/>
    </location>
</feature>
<feature type="helix" evidence="50">
    <location>
        <begin position="326"/>
        <end position="328"/>
    </location>
</feature>
<feature type="helix" evidence="50">
    <location>
        <begin position="334"/>
        <end position="337"/>
    </location>
</feature>
<feature type="helix" evidence="50">
    <location>
        <begin position="347"/>
        <end position="356"/>
    </location>
</feature>
<feature type="helix" evidence="50">
    <location>
        <begin position="358"/>
        <end position="365"/>
    </location>
</feature>
<feature type="helix" evidence="51">
    <location>
        <begin position="366"/>
        <end position="368"/>
    </location>
</feature>
<feature type="helix" evidence="50">
    <location>
        <begin position="371"/>
        <end position="397"/>
    </location>
</feature>
<feature type="strand" evidence="50">
    <location>
        <begin position="401"/>
        <end position="404"/>
    </location>
</feature>
<feature type="helix" evidence="50">
    <location>
        <begin position="407"/>
        <end position="424"/>
    </location>
</feature>
<feature type="helix" evidence="50">
    <location>
        <begin position="434"/>
        <end position="445"/>
    </location>
</feature>
<feature type="helix" evidence="50">
    <location>
        <begin position="450"/>
        <end position="452"/>
    </location>
</feature>
<feature type="strand" evidence="52">
    <location>
        <begin position="456"/>
        <end position="458"/>
    </location>
</feature>
<feature type="helix" evidence="50">
    <location>
        <begin position="459"/>
        <end position="469"/>
    </location>
</feature>
<feature type="helix" evidence="50">
    <location>
        <begin position="472"/>
        <end position="480"/>
    </location>
</feature>
<feature type="helix" evidence="50">
    <location>
        <begin position="482"/>
        <end position="492"/>
    </location>
</feature>
<feature type="helix" evidence="50">
    <location>
        <begin position="495"/>
        <end position="497"/>
    </location>
</feature>
<feature type="helix" evidence="50">
    <location>
        <begin position="498"/>
        <end position="507"/>
    </location>
</feature>
<feature type="strand" evidence="50">
    <location>
        <begin position="510"/>
        <end position="512"/>
    </location>
</feature>
<feature type="turn" evidence="50">
    <location>
        <begin position="513"/>
        <end position="515"/>
    </location>
</feature>
<feature type="strand" evidence="50">
    <location>
        <begin position="516"/>
        <end position="518"/>
    </location>
</feature>
<feature type="helix" evidence="50">
    <location>
        <begin position="521"/>
        <end position="523"/>
    </location>
</feature>
<feature type="turn" evidence="50">
    <location>
        <begin position="526"/>
        <end position="528"/>
    </location>
</feature>
<feature type="turn" evidence="50">
    <location>
        <begin position="532"/>
        <end position="534"/>
    </location>
</feature>
<feature type="helix" evidence="50">
    <location>
        <begin position="552"/>
        <end position="563"/>
    </location>
</feature>
<feature type="helix" evidence="50">
    <location>
        <begin position="571"/>
        <end position="586"/>
    </location>
</feature>